<evidence type="ECO:0000250" key="1">
    <source>
        <dbReference type="UniProtKB" id="P97864"/>
    </source>
</evidence>
<evidence type="ECO:0000256" key="2">
    <source>
        <dbReference type="SAM" id="MobiDB-lite"/>
    </source>
</evidence>
<evidence type="ECO:0000269" key="3">
    <source>
    </source>
</evidence>
<evidence type="ECO:0000269" key="4">
    <source>
    </source>
</evidence>
<evidence type="ECO:0000269" key="5">
    <source>
    </source>
</evidence>
<evidence type="ECO:0000269" key="6">
    <source>
    </source>
</evidence>
<evidence type="ECO:0000269" key="7">
    <source>
    </source>
</evidence>
<evidence type="ECO:0000269" key="8">
    <source>
    </source>
</evidence>
<evidence type="ECO:0000269" key="9">
    <source>
    </source>
</evidence>
<evidence type="ECO:0000269" key="10">
    <source>
    </source>
</evidence>
<evidence type="ECO:0000269" key="11">
    <source>
    </source>
</evidence>
<evidence type="ECO:0000269" key="12">
    <source>
    </source>
</evidence>
<evidence type="ECO:0000269" key="13">
    <source>
    </source>
</evidence>
<evidence type="ECO:0000269" key="14">
    <source>
    </source>
</evidence>
<evidence type="ECO:0000269" key="15">
    <source>
    </source>
</evidence>
<evidence type="ECO:0000269" key="16">
    <source>
    </source>
</evidence>
<evidence type="ECO:0000269" key="17">
    <source>
    </source>
</evidence>
<evidence type="ECO:0000269" key="18">
    <source>
    </source>
</evidence>
<evidence type="ECO:0000269" key="19">
    <source>
    </source>
</evidence>
<evidence type="ECO:0000269" key="20">
    <source>
    </source>
</evidence>
<evidence type="ECO:0000269" key="21">
    <source>
    </source>
</evidence>
<evidence type="ECO:0000269" key="22">
    <source>
    </source>
</evidence>
<evidence type="ECO:0000269" key="23">
    <source>
    </source>
</evidence>
<evidence type="ECO:0000269" key="24">
    <source>
    </source>
</evidence>
<evidence type="ECO:0000269" key="25">
    <source>
    </source>
</evidence>
<evidence type="ECO:0000269" key="26">
    <source>
    </source>
</evidence>
<evidence type="ECO:0000269" key="27">
    <source>
    </source>
</evidence>
<evidence type="ECO:0000269" key="28">
    <source>
    </source>
</evidence>
<evidence type="ECO:0000269" key="29">
    <source>
    </source>
</evidence>
<evidence type="ECO:0000269" key="30">
    <source>
    </source>
</evidence>
<evidence type="ECO:0000269" key="31">
    <source>
    </source>
</evidence>
<evidence type="ECO:0000269" key="32">
    <source>
    </source>
</evidence>
<evidence type="ECO:0000269" key="33">
    <source>
    </source>
</evidence>
<evidence type="ECO:0000269" key="34">
    <source>
    </source>
</evidence>
<evidence type="ECO:0000269" key="35">
    <source>
    </source>
</evidence>
<evidence type="ECO:0000269" key="36">
    <source>
    </source>
</evidence>
<evidence type="ECO:0000269" key="37">
    <source>
    </source>
</evidence>
<evidence type="ECO:0000269" key="38">
    <source>
    </source>
</evidence>
<evidence type="ECO:0000269" key="39">
    <source>
    </source>
</evidence>
<evidence type="ECO:0000269" key="40">
    <source>
    </source>
</evidence>
<evidence type="ECO:0000269" key="41">
    <source>
    </source>
</evidence>
<evidence type="ECO:0000269" key="42">
    <source>
    </source>
</evidence>
<evidence type="ECO:0000269" key="43">
    <source>
    </source>
</evidence>
<evidence type="ECO:0000269" key="44">
    <source>
    </source>
</evidence>
<evidence type="ECO:0000269" key="45">
    <source>
    </source>
</evidence>
<evidence type="ECO:0000269" key="46">
    <source>
    </source>
</evidence>
<evidence type="ECO:0000269" key="47">
    <source>
    </source>
</evidence>
<evidence type="ECO:0000269" key="48">
    <source>
    </source>
</evidence>
<evidence type="ECO:0000269" key="49">
    <source>
    </source>
</evidence>
<evidence type="ECO:0000269" key="50">
    <source ref="5"/>
</evidence>
<evidence type="ECO:0000303" key="51">
    <source>
    </source>
</evidence>
<evidence type="ECO:0000303" key="52">
    <source>
    </source>
</evidence>
<evidence type="ECO:0000303" key="53">
    <source>
    </source>
</evidence>
<evidence type="ECO:0000303" key="54">
    <source>
    </source>
</evidence>
<evidence type="ECO:0000303" key="55">
    <source>
    </source>
</evidence>
<evidence type="ECO:0000303" key="56">
    <source>
    </source>
</evidence>
<evidence type="ECO:0000303" key="57">
    <source>
    </source>
</evidence>
<evidence type="ECO:0000305" key="58"/>
<evidence type="ECO:0000305" key="59">
    <source>
    </source>
</evidence>
<evidence type="ECO:0000305" key="60">
    <source>
    </source>
</evidence>
<evidence type="ECO:0000305" key="61">
    <source>
    </source>
</evidence>
<evidence type="ECO:0000305" key="62">
    <source>
    </source>
</evidence>
<evidence type="ECO:0000305" key="63">
    <source>
    </source>
</evidence>
<evidence type="ECO:0000305" key="64">
    <source>
    </source>
</evidence>
<evidence type="ECO:0000305" key="65">
    <source>
    </source>
</evidence>
<evidence type="ECO:0000312" key="66">
    <source>
        <dbReference type="HGNC" id="HGNC:1508"/>
    </source>
</evidence>
<evidence type="ECO:0007744" key="67">
    <source>
        <dbReference type="PDB" id="1GQF"/>
    </source>
</evidence>
<evidence type="ECO:0007744" key="68">
    <source>
        <dbReference type="PDB" id="1I4O"/>
    </source>
</evidence>
<evidence type="ECO:0007744" key="69">
    <source>
        <dbReference type="PDB" id="1I51"/>
    </source>
</evidence>
<evidence type="ECO:0007744" key="70">
    <source>
        <dbReference type="PDB" id="1SHJ"/>
    </source>
</evidence>
<evidence type="ECO:0007744" key="71">
    <source>
        <dbReference type="PDB" id="1SHL"/>
    </source>
</evidence>
<evidence type="ECO:0007744" key="72">
    <source>
        <dbReference type="PDB" id="2QL5"/>
    </source>
</evidence>
<evidence type="ECO:0007744" key="73">
    <source>
        <dbReference type="PDB" id="2QL7"/>
    </source>
</evidence>
<evidence type="ECO:0007744" key="74">
    <source>
        <dbReference type="PDB" id="2QL9"/>
    </source>
</evidence>
<evidence type="ECO:0007744" key="75">
    <source>
        <dbReference type="PDB" id="2QLB"/>
    </source>
</evidence>
<evidence type="ECO:0007744" key="76">
    <source>
        <dbReference type="PDB" id="2QLF"/>
    </source>
</evidence>
<evidence type="ECO:0007744" key="77">
    <source>
        <dbReference type="PDB" id="2QLJ"/>
    </source>
</evidence>
<evidence type="ECO:0007744" key="78">
    <source>
        <dbReference type="PDB" id="4HQ0"/>
    </source>
</evidence>
<evidence type="ECO:0007744" key="79">
    <source>
        <dbReference type="PDB" id="4HQR"/>
    </source>
</evidence>
<evidence type="ECO:0007744" key="80">
    <source>
        <dbReference type="PDB" id="4JR1"/>
    </source>
</evidence>
<evidence type="ECO:0007744" key="81">
    <source>
        <dbReference type="PDB" id="4JR2"/>
    </source>
</evidence>
<evidence type="ECO:0007744" key="82">
    <source>
        <dbReference type="PDB" id="4LSZ"/>
    </source>
</evidence>
<evidence type="ECO:0007744" key="83">
    <source>
        <dbReference type="PDB" id="4ZVO"/>
    </source>
</evidence>
<evidence type="ECO:0007744" key="84">
    <source>
        <dbReference type="PDB" id="4ZVP"/>
    </source>
</evidence>
<evidence type="ECO:0007744" key="85">
    <source>
        <dbReference type="PDB" id="4ZVQ"/>
    </source>
</evidence>
<evidence type="ECO:0007744" key="86">
    <source>
        <dbReference type="PDB" id="4ZVR"/>
    </source>
</evidence>
<evidence type="ECO:0007744" key="87">
    <source>
        <dbReference type="PDB" id="4ZVS"/>
    </source>
</evidence>
<evidence type="ECO:0007744" key="88">
    <source>
        <dbReference type="PDB" id="4ZVT"/>
    </source>
</evidence>
<evidence type="ECO:0007744" key="89">
    <source>
        <dbReference type="PDB" id="4ZVU"/>
    </source>
</evidence>
<evidence type="ECO:0007744" key="90">
    <source>
        <dbReference type="PDB" id="5K20"/>
    </source>
</evidence>
<evidence type="ECO:0007744" key="91">
    <source>
        <dbReference type="PDB" id="7WZS"/>
    </source>
</evidence>
<evidence type="ECO:0007744" key="92">
    <source>
    </source>
</evidence>
<evidence type="ECO:0007744" key="93">
    <source>
    </source>
</evidence>
<evidence type="ECO:0007744" key="94">
    <source>
    </source>
</evidence>
<evidence type="ECO:0007829" key="95">
    <source>
        <dbReference type="PDB" id="1F1J"/>
    </source>
</evidence>
<evidence type="ECO:0007829" key="96">
    <source>
        <dbReference type="PDB" id="4HQ0"/>
    </source>
</evidence>
<evidence type="ECO:0007829" key="97">
    <source>
        <dbReference type="PDB" id="4JB8"/>
    </source>
</evidence>
<evidence type="ECO:0007829" key="98">
    <source>
        <dbReference type="PDB" id="4JR1"/>
    </source>
</evidence>
<evidence type="ECO:0007829" key="99">
    <source>
        <dbReference type="PDB" id="4JR2"/>
    </source>
</evidence>
<evidence type="ECO:0007829" key="100">
    <source>
        <dbReference type="PDB" id="4ZVO"/>
    </source>
</evidence>
<name>CASP7_HUMAN</name>
<organism>
    <name type="scientific">Homo sapiens</name>
    <name type="common">Human</name>
    <dbReference type="NCBI Taxonomy" id="9606"/>
    <lineage>
        <taxon>Eukaryota</taxon>
        <taxon>Metazoa</taxon>
        <taxon>Chordata</taxon>
        <taxon>Craniata</taxon>
        <taxon>Vertebrata</taxon>
        <taxon>Euteleostomi</taxon>
        <taxon>Mammalia</taxon>
        <taxon>Eutheria</taxon>
        <taxon>Euarchontoglires</taxon>
        <taxon>Primates</taxon>
        <taxon>Haplorrhini</taxon>
        <taxon>Catarrhini</taxon>
        <taxon>Hominidae</taxon>
        <taxon>Homo</taxon>
    </lineage>
</organism>
<keyword id="KW-0002">3D-structure</keyword>
<keyword id="KW-0007">Acetylation</keyword>
<keyword id="KW-0021">Allosteric enzyme</keyword>
<keyword id="KW-0025">Alternative splicing</keyword>
<keyword id="KW-0053">Apoptosis</keyword>
<keyword id="KW-0963">Cytoplasm</keyword>
<keyword id="KW-0378">Hydrolase</keyword>
<keyword id="KW-0539">Nucleus</keyword>
<keyword id="KW-0597">Phosphoprotein</keyword>
<keyword id="KW-0645">Protease</keyword>
<keyword id="KW-1267">Proteomics identification</keyword>
<keyword id="KW-1185">Reference proteome</keyword>
<keyword id="KW-0694">RNA-binding</keyword>
<keyword id="KW-0964">Secreted</keyword>
<keyword id="KW-0788">Thiol protease</keyword>
<keyword id="KW-0832">Ubl conjugation</keyword>
<keyword id="KW-0865">Zymogen</keyword>
<protein>
    <recommendedName>
        <fullName evidence="57">Caspase-7</fullName>
        <shortName evidence="57">CASP-7</shortName>
        <ecNumber evidence="3 5 7 19">3.4.22.60</ecNumber>
    </recommendedName>
    <alternativeName>
        <fullName evidence="54">Apoptotic protease Mch-3</fullName>
    </alternativeName>
    <alternativeName>
        <fullName evidence="55">CMH-1</fullName>
    </alternativeName>
    <alternativeName>
        <fullName evidence="56">ICE-like apoptotic protease 3</fullName>
        <shortName evidence="56">ICE-LAP3</shortName>
    </alternativeName>
    <component>
        <recommendedName>
            <fullName>Caspase-7 subunit p20</fullName>
        </recommendedName>
    </component>
    <component>
        <recommendedName>
            <fullName>Caspase-7 subunit p11</fullName>
        </recommendedName>
    </component>
</protein>
<proteinExistence type="evidence at protein level"/>
<dbReference type="EC" id="3.4.22.60" evidence="3 5 7 19"/>
<dbReference type="EMBL" id="U37448">
    <property type="protein sequence ID" value="AAC50303.1"/>
    <property type="molecule type" value="mRNA"/>
</dbReference>
<dbReference type="EMBL" id="U37449">
    <property type="protein sequence ID" value="AAC50304.1"/>
    <property type="molecule type" value="mRNA"/>
</dbReference>
<dbReference type="EMBL" id="U39613">
    <property type="protein sequence ID" value="AAC50346.1"/>
    <property type="molecule type" value="mRNA"/>
</dbReference>
<dbReference type="EMBL" id="U40281">
    <property type="protein sequence ID" value="AAC50352.1"/>
    <property type="molecule type" value="mRNA"/>
</dbReference>
<dbReference type="EMBL" id="U67319">
    <property type="protein sequence ID" value="AAC51152.1"/>
    <property type="molecule type" value="mRNA"/>
</dbReference>
<dbReference type="EMBL" id="U67320">
    <property type="protein sequence ID" value="AAC51153.1"/>
    <property type="molecule type" value="mRNA"/>
</dbReference>
<dbReference type="EMBL" id="U67206">
    <property type="protein sequence ID" value="AAF21460.1"/>
    <property type="molecule type" value="mRNA"/>
</dbReference>
<dbReference type="EMBL" id="BT006683">
    <property type="protein sequence ID" value="AAP35329.1"/>
    <property type="molecule type" value="mRNA"/>
</dbReference>
<dbReference type="EMBL" id="AB451281">
    <property type="protein sequence ID" value="BAG70095.1"/>
    <property type="molecule type" value="mRNA"/>
</dbReference>
<dbReference type="EMBL" id="AB451413">
    <property type="protein sequence ID" value="BAG70227.1"/>
    <property type="molecule type" value="mRNA"/>
</dbReference>
<dbReference type="EMBL" id="AK298964">
    <property type="protein sequence ID" value="BAG61059.1"/>
    <property type="molecule type" value="mRNA"/>
</dbReference>
<dbReference type="EMBL" id="AL592546">
    <property type="status" value="NOT_ANNOTATED_CDS"/>
    <property type="molecule type" value="Genomic_DNA"/>
</dbReference>
<dbReference type="EMBL" id="AL627395">
    <property type="status" value="NOT_ANNOTATED_CDS"/>
    <property type="molecule type" value="Genomic_DNA"/>
</dbReference>
<dbReference type="EMBL" id="CH471066">
    <property type="protein sequence ID" value="EAW49494.1"/>
    <property type="molecule type" value="Genomic_DNA"/>
</dbReference>
<dbReference type="EMBL" id="CH471066">
    <property type="protein sequence ID" value="EAW49495.1"/>
    <property type="molecule type" value="Genomic_DNA"/>
</dbReference>
<dbReference type="EMBL" id="CH471066">
    <property type="protein sequence ID" value="EAW49498.1"/>
    <property type="molecule type" value="Genomic_DNA"/>
</dbReference>
<dbReference type="EMBL" id="CH471066">
    <property type="protein sequence ID" value="EAW49496.1"/>
    <property type="molecule type" value="Genomic_DNA"/>
</dbReference>
<dbReference type="EMBL" id="CH471066">
    <property type="protein sequence ID" value="EAW49497.1"/>
    <property type="molecule type" value="Genomic_DNA"/>
</dbReference>
<dbReference type="EMBL" id="BC015799">
    <property type="protein sequence ID" value="AAH15799.1"/>
    <property type="molecule type" value="mRNA"/>
</dbReference>
<dbReference type="CCDS" id="CCDS58096.1">
    <molecule id="P55210-4"/>
</dbReference>
<dbReference type="CCDS" id="CCDS7580.1">
    <molecule id="P55210-3"/>
</dbReference>
<dbReference type="CCDS" id="CCDS7581.1">
    <molecule id="P55210-1"/>
</dbReference>
<dbReference type="CCDS" id="CCDS7582.1">
    <molecule id="P55210-2"/>
</dbReference>
<dbReference type="RefSeq" id="NP_001218.1">
    <molecule id="P55210-1"/>
    <property type="nucleotide sequence ID" value="NM_001227.5"/>
</dbReference>
<dbReference type="RefSeq" id="NP_001253985.1">
    <molecule id="P55210-1"/>
    <property type="nucleotide sequence ID" value="NM_001267056.2"/>
</dbReference>
<dbReference type="RefSeq" id="NP_001253986.1">
    <property type="nucleotide sequence ID" value="NM_001267057.1"/>
</dbReference>
<dbReference type="RefSeq" id="NP_001253987.1">
    <molecule id="P55210-4"/>
    <property type="nucleotide sequence ID" value="NM_001267058.2"/>
</dbReference>
<dbReference type="RefSeq" id="NP_001307840.1">
    <property type="nucleotide sequence ID" value="NM_001320911.1"/>
</dbReference>
<dbReference type="RefSeq" id="NP_203124.1">
    <molecule id="P55210-3"/>
    <property type="nucleotide sequence ID" value="NM_033338.6"/>
</dbReference>
<dbReference type="RefSeq" id="NP_203125.1">
    <molecule id="P55210-1"/>
    <property type="nucleotide sequence ID" value="NM_033339.5"/>
</dbReference>
<dbReference type="RefSeq" id="NP_203126.1">
    <molecule id="P55210-2"/>
    <property type="nucleotide sequence ID" value="NM_033340.4"/>
</dbReference>
<dbReference type="PDB" id="1F1J">
    <property type="method" value="X-ray"/>
    <property type="resolution" value="2.35 A"/>
    <property type="chains" value="A/B=2-303"/>
</dbReference>
<dbReference type="PDB" id="1GQF">
    <property type="method" value="X-ray"/>
    <property type="resolution" value="2.90 A"/>
    <property type="chains" value="A/B=47-303"/>
</dbReference>
<dbReference type="PDB" id="1I4O">
    <property type="method" value="X-ray"/>
    <property type="resolution" value="2.40 A"/>
    <property type="chains" value="A/B=24-303"/>
</dbReference>
<dbReference type="PDB" id="1I51">
    <property type="method" value="X-ray"/>
    <property type="resolution" value="2.45 A"/>
    <property type="chains" value="A/C=51-198, B/D=199-303"/>
</dbReference>
<dbReference type="PDB" id="1K86">
    <property type="method" value="X-ray"/>
    <property type="resolution" value="2.60 A"/>
    <property type="chains" value="A/B=51-303"/>
</dbReference>
<dbReference type="PDB" id="1K88">
    <property type="method" value="X-ray"/>
    <property type="resolution" value="2.70 A"/>
    <property type="chains" value="A/B=51-303"/>
</dbReference>
<dbReference type="PDB" id="1KMC">
    <property type="method" value="X-ray"/>
    <property type="resolution" value="2.90 A"/>
    <property type="chains" value="A/B=1-303"/>
</dbReference>
<dbReference type="PDB" id="1SHJ">
    <property type="method" value="X-ray"/>
    <property type="resolution" value="2.80 A"/>
    <property type="chains" value="A/B=50-303"/>
</dbReference>
<dbReference type="PDB" id="1SHL">
    <property type="method" value="X-ray"/>
    <property type="resolution" value="3.00 A"/>
    <property type="chains" value="A/B=57-303"/>
</dbReference>
<dbReference type="PDB" id="2QL5">
    <property type="method" value="X-ray"/>
    <property type="resolution" value="2.34 A"/>
    <property type="chains" value="A/C=24-196, B/D=207-303"/>
</dbReference>
<dbReference type="PDB" id="2QL7">
    <property type="method" value="X-ray"/>
    <property type="resolution" value="2.40 A"/>
    <property type="chains" value="A/C=24-196, B/D=207-303"/>
</dbReference>
<dbReference type="PDB" id="2QL9">
    <property type="method" value="X-ray"/>
    <property type="resolution" value="2.14 A"/>
    <property type="chains" value="A/C=24-196, B/D=207-303"/>
</dbReference>
<dbReference type="PDB" id="2QLB">
    <property type="method" value="X-ray"/>
    <property type="resolution" value="2.25 A"/>
    <property type="chains" value="A/C=24-196, B/D=207-303"/>
</dbReference>
<dbReference type="PDB" id="2QLF">
    <property type="method" value="X-ray"/>
    <property type="resolution" value="2.80 A"/>
    <property type="chains" value="A/C=24-196, B/D=207-303"/>
</dbReference>
<dbReference type="PDB" id="2QLJ">
    <property type="method" value="X-ray"/>
    <property type="resolution" value="2.60 A"/>
    <property type="chains" value="A/C=24-196, B/D=207-303"/>
</dbReference>
<dbReference type="PDB" id="3EDR">
    <property type="method" value="X-ray"/>
    <property type="resolution" value="2.45 A"/>
    <property type="chains" value="A/C=24-196, B/D=207-303"/>
</dbReference>
<dbReference type="PDB" id="3H1P">
    <property type="method" value="X-ray"/>
    <property type="resolution" value="2.61 A"/>
    <property type="chains" value="A/B=50-303"/>
</dbReference>
<dbReference type="PDB" id="3IBC">
    <property type="method" value="X-ray"/>
    <property type="resolution" value="2.75 A"/>
    <property type="chains" value="A/C=24-196, B/D=207-303"/>
</dbReference>
<dbReference type="PDB" id="3IBF">
    <property type="method" value="X-ray"/>
    <property type="resolution" value="2.50 A"/>
    <property type="chains" value="A/C=24-196, B/D=207-303"/>
</dbReference>
<dbReference type="PDB" id="3R5K">
    <property type="method" value="X-ray"/>
    <property type="resolution" value="2.86 A"/>
    <property type="chains" value="A/B=1-303"/>
</dbReference>
<dbReference type="PDB" id="4FDL">
    <property type="method" value="X-ray"/>
    <property type="resolution" value="2.80 A"/>
    <property type="chains" value="A/B=2-303"/>
</dbReference>
<dbReference type="PDB" id="4FEA">
    <property type="method" value="X-ray"/>
    <property type="resolution" value="3.79 A"/>
    <property type="chains" value="A/B=57-303"/>
</dbReference>
<dbReference type="PDB" id="4HQ0">
    <property type="method" value="X-ray"/>
    <property type="resolution" value="3.00 A"/>
    <property type="chains" value="A/B=47-303"/>
</dbReference>
<dbReference type="PDB" id="4HQR">
    <property type="method" value="X-ray"/>
    <property type="resolution" value="3.00 A"/>
    <property type="chains" value="A/B=47-303"/>
</dbReference>
<dbReference type="PDB" id="4JB8">
    <property type="method" value="X-ray"/>
    <property type="resolution" value="1.70 A"/>
    <property type="chains" value="A=24-198, B=207-303"/>
</dbReference>
<dbReference type="PDB" id="4JJ8">
    <property type="method" value="X-ray"/>
    <property type="resolution" value="2.94 A"/>
    <property type="chains" value="A/B=57-303"/>
</dbReference>
<dbReference type="PDB" id="4JR1">
    <property type="method" value="X-ray"/>
    <property type="resolution" value="2.15 A"/>
    <property type="chains" value="A/B=57-303"/>
</dbReference>
<dbReference type="PDB" id="4JR2">
    <property type="method" value="X-ray"/>
    <property type="resolution" value="1.65 A"/>
    <property type="chains" value="A/B=57-303"/>
</dbReference>
<dbReference type="PDB" id="4LSZ">
    <property type="method" value="X-ray"/>
    <property type="resolution" value="2.26 A"/>
    <property type="chains" value="A/C=24-198, B/D=207-303"/>
</dbReference>
<dbReference type="PDB" id="4ZVO">
    <property type="method" value="X-ray"/>
    <property type="resolution" value="2.85 A"/>
    <property type="chains" value="A/C=1-198, B/D=199-303"/>
</dbReference>
<dbReference type="PDB" id="4ZVP">
    <property type="method" value="X-ray"/>
    <property type="resolution" value="2.50 A"/>
    <property type="chains" value="A/C=1-198, B/D=199-303"/>
</dbReference>
<dbReference type="PDB" id="4ZVQ">
    <property type="method" value="X-ray"/>
    <property type="resolution" value="2.50 A"/>
    <property type="chains" value="A/C=1-198, B/D=199-303"/>
</dbReference>
<dbReference type="PDB" id="4ZVR">
    <property type="method" value="X-ray"/>
    <property type="resolution" value="2.30 A"/>
    <property type="chains" value="A/C=1-198, B/D=199-303"/>
</dbReference>
<dbReference type="PDB" id="4ZVS">
    <property type="method" value="X-ray"/>
    <property type="resolution" value="2.50 A"/>
    <property type="chains" value="A/C=1-198, B/D=199-303"/>
</dbReference>
<dbReference type="PDB" id="4ZVT">
    <property type="method" value="X-ray"/>
    <property type="resolution" value="2.85 A"/>
    <property type="chains" value="A/C=1-198, B/D=199-303"/>
</dbReference>
<dbReference type="PDB" id="4ZVU">
    <property type="method" value="X-ray"/>
    <property type="resolution" value="2.60 A"/>
    <property type="chains" value="A/C=1-198, B/D=199-303"/>
</dbReference>
<dbReference type="PDB" id="5IC6">
    <property type="method" value="X-ray"/>
    <property type="resolution" value="2.70 A"/>
    <property type="chains" value="A/C=1-198, B/D=199-303"/>
</dbReference>
<dbReference type="PDB" id="5K20">
    <property type="method" value="X-ray"/>
    <property type="resolution" value="2.20 A"/>
    <property type="chains" value="A/C=1-198, B/D=199-303"/>
</dbReference>
<dbReference type="PDB" id="5V6U">
    <property type="method" value="X-ray"/>
    <property type="resolution" value="2.80 A"/>
    <property type="chains" value="A/B=1-303"/>
</dbReference>
<dbReference type="PDB" id="5V6Z">
    <property type="method" value="X-ray"/>
    <property type="resolution" value="2.60 A"/>
    <property type="chains" value="A/B=1-303"/>
</dbReference>
<dbReference type="PDB" id="7WZS">
    <property type="method" value="X-ray"/>
    <property type="resolution" value="3.60 A"/>
    <property type="chains" value="B=24-303"/>
</dbReference>
<dbReference type="PDB" id="8DGZ">
    <property type="method" value="X-ray"/>
    <property type="resolution" value="2.80 A"/>
    <property type="chains" value="A/B=2-303"/>
</dbReference>
<dbReference type="PDB" id="8DJ3">
    <property type="method" value="X-ray"/>
    <property type="resolution" value="3.20 A"/>
    <property type="chains" value="A/B=2-303"/>
</dbReference>
<dbReference type="PDBsum" id="1F1J"/>
<dbReference type="PDBsum" id="1GQF"/>
<dbReference type="PDBsum" id="1I4O"/>
<dbReference type="PDBsum" id="1I51"/>
<dbReference type="PDBsum" id="1K86"/>
<dbReference type="PDBsum" id="1K88"/>
<dbReference type="PDBsum" id="1KMC"/>
<dbReference type="PDBsum" id="1SHJ"/>
<dbReference type="PDBsum" id="1SHL"/>
<dbReference type="PDBsum" id="2QL5"/>
<dbReference type="PDBsum" id="2QL7"/>
<dbReference type="PDBsum" id="2QL9"/>
<dbReference type="PDBsum" id="2QLB"/>
<dbReference type="PDBsum" id="2QLF"/>
<dbReference type="PDBsum" id="2QLJ"/>
<dbReference type="PDBsum" id="3EDR"/>
<dbReference type="PDBsum" id="3H1P"/>
<dbReference type="PDBsum" id="3IBC"/>
<dbReference type="PDBsum" id="3IBF"/>
<dbReference type="PDBsum" id="3R5K"/>
<dbReference type="PDBsum" id="4FDL"/>
<dbReference type="PDBsum" id="4FEA"/>
<dbReference type="PDBsum" id="4HQ0"/>
<dbReference type="PDBsum" id="4HQR"/>
<dbReference type="PDBsum" id="4JB8"/>
<dbReference type="PDBsum" id="4JJ8"/>
<dbReference type="PDBsum" id="4JR1"/>
<dbReference type="PDBsum" id="4JR2"/>
<dbReference type="PDBsum" id="4LSZ"/>
<dbReference type="PDBsum" id="4ZVO"/>
<dbReference type="PDBsum" id="4ZVP"/>
<dbReference type="PDBsum" id="4ZVQ"/>
<dbReference type="PDBsum" id="4ZVR"/>
<dbReference type="PDBsum" id="4ZVS"/>
<dbReference type="PDBsum" id="4ZVT"/>
<dbReference type="PDBsum" id="4ZVU"/>
<dbReference type="PDBsum" id="5IC6"/>
<dbReference type="PDBsum" id="5K20"/>
<dbReference type="PDBsum" id="5V6U"/>
<dbReference type="PDBsum" id="5V6Z"/>
<dbReference type="PDBsum" id="7WZS"/>
<dbReference type="PDBsum" id="8DGZ"/>
<dbReference type="PDBsum" id="8DJ3"/>
<dbReference type="EMDB" id="EMD-27840"/>
<dbReference type="SMR" id="P55210"/>
<dbReference type="BioGRID" id="107290">
    <property type="interactions" value="67"/>
</dbReference>
<dbReference type="ComplexPortal" id="CPX-2862">
    <property type="entry name" value="Caspase-7 complex"/>
</dbReference>
<dbReference type="CORUM" id="P55210"/>
<dbReference type="DIP" id="DIP-29973N"/>
<dbReference type="ELM" id="P55210"/>
<dbReference type="FunCoup" id="P55210">
    <property type="interactions" value="2136"/>
</dbReference>
<dbReference type="IntAct" id="P55210">
    <property type="interactions" value="30"/>
</dbReference>
<dbReference type="MINT" id="P55210"/>
<dbReference type="STRING" id="9606.ENSP00000358327"/>
<dbReference type="BindingDB" id="P55210"/>
<dbReference type="ChEMBL" id="CHEMBL3468"/>
<dbReference type="DrugBank" id="DB05408">
    <property type="generic name" value="Emricasan"/>
</dbReference>
<dbReference type="DrugBank" id="DB03384">
    <property type="generic name" value="Fica"/>
</dbReference>
<dbReference type="DrugBank" id="DB06255">
    <property type="generic name" value="Incadronic acid"/>
</dbReference>
<dbReference type="DrugCentral" id="P55210"/>
<dbReference type="GuidetoPHARMACOLOGY" id="1623"/>
<dbReference type="MEROPS" id="C14.004"/>
<dbReference type="TCDB" id="8.A.217.1.1">
    <property type="family name" value="the apoptosis cell death regulator (acdr) family"/>
</dbReference>
<dbReference type="GlyGen" id="P55210">
    <property type="glycosylation" value="2 sites, 9 N-linked glycans (2 sites)"/>
</dbReference>
<dbReference type="iPTMnet" id="P55210"/>
<dbReference type="PhosphoSitePlus" id="P55210"/>
<dbReference type="BioMuta" id="CASP7"/>
<dbReference type="DMDM" id="1730092"/>
<dbReference type="jPOST" id="P55210"/>
<dbReference type="MassIVE" id="P55210"/>
<dbReference type="PaxDb" id="9606-ENSP00000358327"/>
<dbReference type="PeptideAtlas" id="P55210"/>
<dbReference type="ProteomicsDB" id="56811">
    <molecule id="P55210-1"/>
</dbReference>
<dbReference type="ProteomicsDB" id="56812">
    <molecule id="P55210-2"/>
</dbReference>
<dbReference type="ProteomicsDB" id="56813">
    <molecule id="P55210-3"/>
</dbReference>
<dbReference type="Pumba" id="P55210"/>
<dbReference type="ABCD" id="P55210">
    <property type="antibodies" value="3 sequenced antibodies"/>
</dbReference>
<dbReference type="Antibodypedia" id="18528">
    <property type="antibodies" value="1078 antibodies from 47 providers"/>
</dbReference>
<dbReference type="DNASU" id="840"/>
<dbReference type="Ensembl" id="ENST00000345633.8">
    <molecule id="P55210-1"/>
    <property type="protein sequence ID" value="ENSP00000298701.7"/>
    <property type="gene ID" value="ENSG00000165806.21"/>
</dbReference>
<dbReference type="Ensembl" id="ENST00000369315.5">
    <molecule id="P55210-1"/>
    <property type="protein sequence ID" value="ENSP00000358321.1"/>
    <property type="gene ID" value="ENSG00000165806.21"/>
</dbReference>
<dbReference type="Ensembl" id="ENST00000369318.8">
    <molecule id="P55210-1"/>
    <property type="protein sequence ID" value="ENSP00000358324.4"/>
    <property type="gene ID" value="ENSG00000165806.21"/>
</dbReference>
<dbReference type="Ensembl" id="ENST00000369331.8">
    <molecule id="P55210-2"/>
    <property type="protein sequence ID" value="ENSP00000358337.3"/>
    <property type="gene ID" value="ENSG00000165806.21"/>
</dbReference>
<dbReference type="Ensembl" id="ENST00000452490.3">
    <molecule id="P55210-4"/>
    <property type="protein sequence ID" value="ENSP00000398107.2"/>
    <property type="gene ID" value="ENSG00000165806.21"/>
</dbReference>
<dbReference type="Ensembl" id="ENST00000614447.4">
    <molecule id="P55210-2"/>
    <property type="protein sequence ID" value="ENSP00000478285.1"/>
    <property type="gene ID" value="ENSG00000165806.21"/>
</dbReference>
<dbReference type="Ensembl" id="ENST00000621345.4">
    <molecule id="P55210-1"/>
    <property type="protein sequence ID" value="ENSP00000480584.1"/>
    <property type="gene ID" value="ENSG00000165806.21"/>
</dbReference>
<dbReference type="Ensembl" id="ENST00000621607.4">
    <molecule id="P55210-3"/>
    <property type="protein sequence ID" value="ENSP00000478999.1"/>
    <property type="gene ID" value="ENSG00000165806.21"/>
</dbReference>
<dbReference type="GeneID" id="840"/>
<dbReference type="KEGG" id="hsa:840"/>
<dbReference type="MANE-Select" id="ENST00000369318.8">
    <property type="protein sequence ID" value="ENSP00000358324.4"/>
    <property type="RefSeq nucleotide sequence ID" value="NM_001227.5"/>
    <property type="RefSeq protein sequence ID" value="NP_001218.1"/>
</dbReference>
<dbReference type="UCSC" id="uc001lam.5">
    <molecule id="P55210-1"/>
    <property type="organism name" value="human"/>
</dbReference>
<dbReference type="AGR" id="HGNC:1508"/>
<dbReference type="CTD" id="840"/>
<dbReference type="DisGeNET" id="840"/>
<dbReference type="GeneCards" id="CASP7"/>
<dbReference type="HGNC" id="HGNC:1508">
    <property type="gene designation" value="CASP7"/>
</dbReference>
<dbReference type="HPA" id="ENSG00000165806">
    <property type="expression patterns" value="Low tissue specificity"/>
</dbReference>
<dbReference type="MIM" id="601761">
    <property type="type" value="gene"/>
</dbReference>
<dbReference type="neXtProt" id="NX_P55210"/>
<dbReference type="OpenTargets" id="ENSG00000165806"/>
<dbReference type="PharmGKB" id="PA26091"/>
<dbReference type="VEuPathDB" id="HostDB:ENSG00000165806"/>
<dbReference type="eggNOG" id="KOG3573">
    <property type="taxonomic scope" value="Eukaryota"/>
</dbReference>
<dbReference type="GeneTree" id="ENSGT00940000153232"/>
<dbReference type="HOGENOM" id="CLU_1098210_0_0_1"/>
<dbReference type="InParanoid" id="P55210"/>
<dbReference type="OMA" id="VAVYNDC"/>
<dbReference type="OrthoDB" id="6116485at2759"/>
<dbReference type="PAN-GO" id="P55210">
    <property type="GO annotations" value="4 GO annotations based on evolutionary models"/>
</dbReference>
<dbReference type="PhylomeDB" id="P55210"/>
<dbReference type="TreeFam" id="TF102023"/>
<dbReference type="BioCyc" id="MetaCyc:HS09288-MONOMER"/>
<dbReference type="BRENDA" id="3.4.22.60">
    <property type="organism ID" value="2681"/>
</dbReference>
<dbReference type="PathwayCommons" id="P55210"/>
<dbReference type="Reactome" id="R-HSA-111459">
    <property type="pathway name" value="Activation of caspases through apoptosome-mediated cleavage"/>
</dbReference>
<dbReference type="Reactome" id="R-HSA-111463">
    <property type="pathway name" value="SMAC (DIABLO) binds to IAPs"/>
</dbReference>
<dbReference type="Reactome" id="R-HSA-111464">
    <property type="pathway name" value="SMAC(DIABLO)-mediated dissociation of IAP:caspase complexes"/>
</dbReference>
<dbReference type="Reactome" id="R-HSA-111465">
    <property type="pathway name" value="Apoptotic cleavage of cellular proteins"/>
</dbReference>
<dbReference type="Reactome" id="R-HSA-111469">
    <property type="pathway name" value="SMAC, XIAP-regulated apoptotic response"/>
</dbReference>
<dbReference type="Reactome" id="R-HSA-264870">
    <property type="pathway name" value="Caspase-mediated cleavage of cytoskeletal proteins"/>
</dbReference>
<dbReference type="SignaLink" id="P55210"/>
<dbReference type="SIGNOR" id="P55210"/>
<dbReference type="BioGRID-ORCS" id="840">
    <property type="hits" value="17 hits in 1171 CRISPR screens"/>
</dbReference>
<dbReference type="ChiTaRS" id="CASP7">
    <property type="organism name" value="human"/>
</dbReference>
<dbReference type="EvolutionaryTrace" id="P55210"/>
<dbReference type="GeneWiki" id="Caspase_7"/>
<dbReference type="GenomeRNAi" id="840"/>
<dbReference type="Pharos" id="P55210">
    <property type="development level" value="Tchem"/>
</dbReference>
<dbReference type="PRO" id="PR:P55210"/>
<dbReference type="Proteomes" id="UP000005640">
    <property type="component" value="Chromosome 10"/>
</dbReference>
<dbReference type="RNAct" id="P55210">
    <property type="molecule type" value="protein"/>
</dbReference>
<dbReference type="Bgee" id="ENSG00000165806">
    <property type="expression patterns" value="Expressed in rectum and 181 other cell types or tissues"/>
</dbReference>
<dbReference type="ExpressionAtlas" id="P55210">
    <property type="expression patterns" value="baseline and differential"/>
</dbReference>
<dbReference type="GO" id="GO:0005737">
    <property type="term" value="C:cytoplasm"/>
    <property type="evidence" value="ECO:0000314"/>
    <property type="project" value="UniProtKB"/>
</dbReference>
<dbReference type="GO" id="GO:0005829">
    <property type="term" value="C:cytosol"/>
    <property type="evidence" value="ECO:0000314"/>
    <property type="project" value="UniProtKB"/>
</dbReference>
<dbReference type="GO" id="GO:0005615">
    <property type="term" value="C:extracellular space"/>
    <property type="evidence" value="ECO:0000304"/>
    <property type="project" value="UniProt"/>
</dbReference>
<dbReference type="GO" id="GO:0001650">
    <property type="term" value="C:fibrillar center"/>
    <property type="evidence" value="ECO:0000314"/>
    <property type="project" value="HPA"/>
</dbReference>
<dbReference type="GO" id="GO:0005654">
    <property type="term" value="C:nucleoplasm"/>
    <property type="evidence" value="ECO:0000314"/>
    <property type="project" value="HPA"/>
</dbReference>
<dbReference type="GO" id="GO:0005634">
    <property type="term" value="C:nucleus"/>
    <property type="evidence" value="ECO:0000314"/>
    <property type="project" value="UniProtKB"/>
</dbReference>
<dbReference type="GO" id="GO:0005886">
    <property type="term" value="C:plasma membrane"/>
    <property type="evidence" value="ECO:0000314"/>
    <property type="project" value="HPA"/>
</dbReference>
<dbReference type="GO" id="GO:0004190">
    <property type="term" value="F:aspartic-type endopeptidase activity"/>
    <property type="evidence" value="ECO:0007669"/>
    <property type="project" value="Ensembl"/>
</dbReference>
<dbReference type="GO" id="GO:0004197">
    <property type="term" value="F:cysteine-type endopeptidase activity"/>
    <property type="evidence" value="ECO:0000314"/>
    <property type="project" value="UniProtKB"/>
</dbReference>
<dbReference type="GO" id="GO:0008234">
    <property type="term" value="F:cysteine-type peptidase activity"/>
    <property type="evidence" value="ECO:0000304"/>
    <property type="project" value="ProtInc"/>
</dbReference>
<dbReference type="GO" id="GO:0008233">
    <property type="term" value="F:peptidase activity"/>
    <property type="evidence" value="ECO:0000314"/>
    <property type="project" value="BHF-UCL"/>
</dbReference>
<dbReference type="GO" id="GO:0003723">
    <property type="term" value="F:RNA binding"/>
    <property type="evidence" value="ECO:0000314"/>
    <property type="project" value="UniProtKB"/>
</dbReference>
<dbReference type="GO" id="GO:0006915">
    <property type="term" value="P:apoptotic process"/>
    <property type="evidence" value="ECO:0000314"/>
    <property type="project" value="UniProtKB"/>
</dbReference>
<dbReference type="GO" id="GO:0071222">
    <property type="term" value="P:cellular response to lipopolysaccharide"/>
    <property type="evidence" value="ECO:0000314"/>
    <property type="project" value="UniProt"/>
</dbReference>
<dbReference type="GO" id="GO:0072734">
    <property type="term" value="P:cellular response to staurosporine"/>
    <property type="evidence" value="ECO:0000315"/>
    <property type="project" value="CAFA"/>
</dbReference>
<dbReference type="GO" id="GO:0042742">
    <property type="term" value="P:defense response to bacterium"/>
    <property type="evidence" value="ECO:0007669"/>
    <property type="project" value="Ensembl"/>
</dbReference>
<dbReference type="GO" id="GO:0097194">
    <property type="term" value="P:execution phase of apoptosis"/>
    <property type="evidence" value="ECO:0000314"/>
    <property type="project" value="UniProt"/>
</dbReference>
<dbReference type="GO" id="GO:0044346">
    <property type="term" value="P:fibroblast apoptotic process"/>
    <property type="evidence" value="ECO:0007669"/>
    <property type="project" value="Ensembl"/>
</dbReference>
<dbReference type="GO" id="GO:0007507">
    <property type="term" value="P:heart development"/>
    <property type="evidence" value="ECO:0007669"/>
    <property type="project" value="Ensembl"/>
</dbReference>
<dbReference type="GO" id="GO:0070227">
    <property type="term" value="P:lymphocyte apoptotic process"/>
    <property type="evidence" value="ECO:0000250"/>
    <property type="project" value="UniProtKB"/>
</dbReference>
<dbReference type="GO" id="GO:0051402">
    <property type="term" value="P:neuron apoptotic process"/>
    <property type="evidence" value="ECO:0007669"/>
    <property type="project" value="Ensembl"/>
</dbReference>
<dbReference type="GO" id="GO:0043525">
    <property type="term" value="P:positive regulation of neuron apoptotic process"/>
    <property type="evidence" value="ECO:0000318"/>
    <property type="project" value="GO_Central"/>
</dbReference>
<dbReference type="GO" id="GO:1905686">
    <property type="term" value="P:positive regulation of plasma membrane repair"/>
    <property type="evidence" value="ECO:0007669"/>
    <property type="project" value="Ensembl"/>
</dbReference>
<dbReference type="GO" id="GO:0030163">
    <property type="term" value="P:protein catabolic process"/>
    <property type="evidence" value="ECO:0000314"/>
    <property type="project" value="UniProt"/>
</dbReference>
<dbReference type="GO" id="GO:0051604">
    <property type="term" value="P:protein maturation"/>
    <property type="evidence" value="ECO:0000314"/>
    <property type="project" value="UniProt"/>
</dbReference>
<dbReference type="GO" id="GO:0016485">
    <property type="term" value="P:protein processing"/>
    <property type="evidence" value="ECO:0007669"/>
    <property type="project" value="Ensembl"/>
</dbReference>
<dbReference type="GO" id="GO:0006508">
    <property type="term" value="P:proteolysis"/>
    <property type="evidence" value="ECO:0000314"/>
    <property type="project" value="UniProtKB"/>
</dbReference>
<dbReference type="GO" id="GO:0009411">
    <property type="term" value="P:response to UV"/>
    <property type="evidence" value="ECO:0007669"/>
    <property type="project" value="Ensembl"/>
</dbReference>
<dbReference type="GO" id="GO:0051146">
    <property type="term" value="P:striated muscle cell differentiation"/>
    <property type="evidence" value="ECO:0007669"/>
    <property type="project" value="Ensembl"/>
</dbReference>
<dbReference type="CDD" id="cd00032">
    <property type="entry name" value="CASc"/>
    <property type="match status" value="1"/>
</dbReference>
<dbReference type="FunFam" id="3.30.70.1470:FF:000002">
    <property type="entry name" value="Caspase-3"/>
    <property type="match status" value="1"/>
</dbReference>
<dbReference type="FunFam" id="3.40.50.1460:FF:000001">
    <property type="entry name" value="Caspase-3 preproprotein"/>
    <property type="match status" value="1"/>
</dbReference>
<dbReference type="Gene3D" id="3.40.50.1460">
    <property type="match status" value="1"/>
</dbReference>
<dbReference type="Gene3D" id="3.30.70.1470">
    <property type="entry name" value="Caspase-like"/>
    <property type="match status" value="1"/>
</dbReference>
<dbReference type="InterPro" id="IPR029030">
    <property type="entry name" value="Caspase-like_dom_sf"/>
</dbReference>
<dbReference type="InterPro" id="IPR033139">
    <property type="entry name" value="Caspase_cys_AS"/>
</dbReference>
<dbReference type="InterPro" id="IPR016129">
    <property type="entry name" value="Caspase_his_AS"/>
</dbReference>
<dbReference type="InterPro" id="IPR002398">
    <property type="entry name" value="Pept_C14"/>
</dbReference>
<dbReference type="InterPro" id="IPR011600">
    <property type="entry name" value="Pept_C14_caspase"/>
</dbReference>
<dbReference type="InterPro" id="IPR002138">
    <property type="entry name" value="Pept_C14_p10"/>
</dbReference>
<dbReference type="InterPro" id="IPR001309">
    <property type="entry name" value="Pept_C14_p20"/>
</dbReference>
<dbReference type="InterPro" id="IPR015917">
    <property type="entry name" value="Pept_C14A"/>
</dbReference>
<dbReference type="PANTHER" id="PTHR10454">
    <property type="entry name" value="CASPASE"/>
    <property type="match status" value="1"/>
</dbReference>
<dbReference type="PANTHER" id="PTHR10454:SF31">
    <property type="entry name" value="CASPASE-7"/>
    <property type="match status" value="1"/>
</dbReference>
<dbReference type="Pfam" id="PF00656">
    <property type="entry name" value="Peptidase_C14"/>
    <property type="match status" value="1"/>
</dbReference>
<dbReference type="PIRSF" id="PIRSF038001">
    <property type="entry name" value="Caspase_ICE"/>
    <property type="match status" value="1"/>
</dbReference>
<dbReference type="PRINTS" id="PR00376">
    <property type="entry name" value="IL1BCENZYME"/>
</dbReference>
<dbReference type="SMART" id="SM00115">
    <property type="entry name" value="CASc"/>
    <property type="match status" value="1"/>
</dbReference>
<dbReference type="SUPFAM" id="SSF52129">
    <property type="entry name" value="Caspase-like"/>
    <property type="match status" value="1"/>
</dbReference>
<dbReference type="PROSITE" id="PS01122">
    <property type="entry name" value="CASPASE_CYS"/>
    <property type="match status" value="1"/>
</dbReference>
<dbReference type="PROSITE" id="PS01121">
    <property type="entry name" value="CASPASE_HIS"/>
    <property type="match status" value="1"/>
</dbReference>
<dbReference type="PROSITE" id="PS50207">
    <property type="entry name" value="CASPASE_P10"/>
    <property type="match status" value="1"/>
</dbReference>
<dbReference type="PROSITE" id="PS50208">
    <property type="entry name" value="CASPASE_P20"/>
    <property type="match status" value="1"/>
</dbReference>
<comment type="function">
    <text evidence="1 3 5 6 7 9 11 13 15 16 17 18 19 20 22 23 24 25 26 27 28 29 30 33 34 35 37 38 39 40 41 42 43 44 45 46 48">Thiol protease involved in different programmed cell death processes, such as apoptosis, pyroptosis or granzyme-mediated programmed cell death, by proteolytically cleaving target proteins (PubMed:11257230, PubMed:11257231, PubMed:11701129, PubMed:15314233, PubMed:16916640, PubMed:17646170, PubMed:18723680, PubMed:19581639, PubMed:8521391, PubMed:8567622, PubMed:8576161, PubMed:9070923). Has a marked preference for Asp-Glu-Val-Asp (DEVD) consensus sequences, with some plasticity for alternate non-canonical sequences (PubMed:12824163, PubMed:15314233, PubMed:17697120, PubMed:19581639, PubMed:20566630, PubMed:23650375, PubMed:23897474, PubMed:27032039). Its involvement in the different programmed cell death processes is probably determined by upstream proteases that activate CASP7 (By similarity). Acts as an effector caspase involved in the execution phase of apoptosis: following cleavage and activation by initiator caspases (CASP8, CASP9 and/or CASP10), mediates execution of apoptosis by catalyzing cleavage of proteins, such as CLSPN, PARP1, PTGES3 and YY1 (PubMed:10497198, PubMed:16123041, PubMed:16374543, PubMed:16916640, PubMed:18723680, PubMed:20566630, PubMed:21555521, PubMed:22184066, PubMed:22451931, PubMed:27889207, PubMed:28863261, PubMed:31586028, PubMed:34156061, PubMed:35338844, PubMed:35446120). Compared to CASP3, acts as a minor executioner caspase and cleaves a limited set of target proteins (PubMed:18723680). Acts as a key regulator of the inflammatory response in response to bacterial infection by catalyzing cleavage and activation of the sphingomyelin phosphodiesterase SMPD1 in the extracellular milieu, thereby promoting membrane repair (PubMed:21157428). Regulates pyroptosis in intestinal epithelial cells: cleaved and activated by CASP1 in response to S.typhimurium infection, promoting its secretion to the extracellular milieu, where it catalyzes activation of SMPD1, generating ceramides that repair membranes and counteract the action of gasdermin-D (GSDMD) pores (By similarity). Regulates granzyme-mediated programmed cell death in hepatocytes: cleaved and activated by granzyme B (GZMB) in response to bacterial infection, promoting its secretion to the extracellular milieu, where it catalyzes activation of SMPD1, generating ceramides that repair membranes and counteract the action of perforin (PRF1) pores (By similarity). Following cleavage by CASP1 in response to inflammasome activation, catalyzes processing and inactivation of PARP1, alleviating the transcription repressor activity of PARP1 (PubMed:22464733). Acts as an inhibitor of type I interferon production during virus-induced apoptosis by mediating cleavage of antiviral proteins CGAS, IRF3 and MAVS, thereby preventing cytokine overproduction (By similarity). Cleaves and activates sterol regulatory element binding proteins (SREBPs) (PubMed:8643593). Cleaves phospholipid scramblase proteins XKR4, XKR8 and XKR9 (By similarity). In case of infection, catalyzes cleavage of Kaposi sarcoma-associated herpesvirus protein ORF57, thereby preventing expression of viral lytic genes (PubMed:20159985). Cleaves BIRC6 following inhibition of BIRC6-caspase binding by DIABLO/SMAC (PubMed:36758104, PubMed:36758106).</text>
</comment>
<comment type="function">
    <molecule>Isoform Beta</molecule>
    <text evidence="43">Lacks enzymatic activity.</text>
</comment>
<comment type="catalytic activity">
    <reaction evidence="3 5 7 9 13 15 16 17 18 19 20 21 23 27 29 30 33 37 38">
        <text>Strict requirement for an Asp residue at position P1 and has a preferred cleavage sequence of Asp-Glu-Val-Asp-|-.</text>
        <dbReference type="EC" id="3.4.22.60"/>
    </reaction>
</comment>
<comment type="activity regulation">
    <text evidence="1 4 5 6 9 11 14 16 20 25 31 34 41 42">During activation, the N-terminal disordered prodomain is removed by cleavage (PubMed:12824163, PubMed:16916640). Concomitantly, double cleavage gives rise to a large Caspase-7 subunit p20 and a small Caspase-7 subunit p11 (PubMed:16916640). The two large and two small subunits then assemble to form the active CASP7 complex (PubMed:16916640). Can be cleaved and activated by different caspases, depending on the context (PubMed:16916640). Cleaved and activated by initiator caspases (CASP8, CASP9 and/or CASP10), leading to execution phase of apoptosis (PubMed:16352606, PubMed:16916640). Inhibited by XIAP, which directly binds to the active site pocket and obstructs substrate entry (PubMed:11257230, PubMed:11257231, PubMed:16352606, PubMed:16916640). Cleavage and maturation by GZMB regulates granzyme-mediated programmed cell death (By similarity). Cleavage and maturation by CASP1 regulates pyroptosis (By similarity). Phosphorylation at Ser-30 and Ser-239 by PAK2 inhibits its activity (PubMed:21555521, PubMed:27889207). Inhibited by isatin sulfonamides (PubMed:10821855). Inhibited by 2-(2,4-Dichlorophenoxy)- N-(2-mercapto-ethyl)-acetamide (DICA) and 5-Fluoro-1H-indole-2- carboxylic acid (2-mercapto-ethyl)-amide (FICA) allosteric inhibitors, which disrupt an interaction between Arg-187 and Tyr-223 (PubMed:15314233, PubMed:19581639). Specifically inhibited by DARPin D7.18 and D7.43, which specifically bind to the precursor CASP7 and prevent its processing and activation (PubMed:24779913). Inhibited by BIRC6; following inhibition of BIRC6-caspase binding by DIABLO/SMAC, BIRC6 is subjected to caspase cleavage, leading to an increase in active caspases (PubMed:36758104, PubMed:36758106).</text>
</comment>
<comment type="biophysicochemical properties">
    <kinetics>
        <KM evidence="20">10 uM for a DEVD peptide</KM>
        <text evidence="20">kcat is 0.51 sec(-1) for a DEVD peptide.</text>
    </kinetics>
</comment>
<comment type="subunit">
    <text evidence="5 6 7 8 10 16 23 32 36">Heterotetramer that consists of two anti-parallel arranged heterodimers, each one formed by a 20 kDa (p20) and a 11 kDa (p11) subunit (PubMed:11701129, PubMed:11752425, PubMed:16916640, PubMed:20566630). Interacts with XIAP (via its second BIR domain); inhibiting CASP7 activity (PubMed:11257230, PubMed:11257231, PubMed:16916640). Interacts with BIRC6/bruce (PubMed:15200957). Interacts with ATXN3 (short isoform 1) (PubMed:30455355). Interacts with HSPA5 (PubMed:26045166).</text>
</comment>
<comment type="interaction">
    <interactant intactId="EBI-523958">
        <id>P55210</id>
    </interactant>
    <interactant intactId="EBI-514538">
        <id>Q13490</id>
        <label>BIRC2</label>
    </interactant>
    <organismsDiffer>false</organismsDiffer>
    <experiments>3</experiments>
</comment>
<comment type="interaction">
    <interactant intactId="EBI-523958">
        <id>P55210</id>
    </interactant>
    <interactant intactId="EBI-21776319">
        <id>P83105</id>
        <label>HTRA4</label>
    </interactant>
    <organismsDiffer>false</organismsDiffer>
    <experiments>6</experiments>
</comment>
<comment type="interaction">
    <interactant intactId="EBI-523958">
        <id>P55210</id>
    </interactant>
    <interactant intactId="EBI-466029">
        <id>P42858</id>
        <label>HTT</label>
    </interactant>
    <organismsDiffer>false</organismsDiffer>
    <experiments>12</experiments>
</comment>
<comment type="interaction">
    <interactant intactId="EBI-523958">
        <id>P55210</id>
    </interactant>
    <interactant intactId="EBI-10973851">
        <id>Q8N4N3-2</id>
        <label>KLHL36</label>
    </interactant>
    <organismsDiffer>false</organismsDiffer>
    <experiments>3</experiments>
</comment>
<comment type="interaction">
    <interactant intactId="EBI-523958">
        <id>P55210</id>
    </interactant>
    <interactant intactId="EBI-739552">
        <id>P43364</id>
        <label>MAGEA11</label>
    </interactant>
    <organismsDiffer>false</organismsDiffer>
    <experiments>3</experiments>
</comment>
<comment type="interaction">
    <interactant intactId="EBI-523958">
        <id>P55210</id>
    </interactant>
    <interactant intactId="EBI-2007911">
        <id>Q16236</id>
        <label>NFE2L2</label>
    </interactant>
    <organismsDiffer>false</organismsDiffer>
    <experiments>2</experiments>
</comment>
<comment type="interaction">
    <interactant intactId="EBI-523958">
        <id>P55210</id>
    </interactant>
    <interactant intactId="EBI-740897">
        <id>Q9GZT8</id>
        <label>NIF3L1</label>
    </interactant>
    <organismsDiffer>false</organismsDiffer>
    <experiments>3</experiments>
</comment>
<comment type="interaction">
    <interactant intactId="EBI-523958">
        <id>P55210</id>
    </interactant>
    <interactant intactId="EBI-1045887">
        <id>Q13177</id>
        <label>PAK2</label>
    </interactant>
    <organismsDiffer>false</organismsDiffer>
    <experiments>6</experiments>
</comment>
<comment type="interaction">
    <interactant intactId="EBI-523958">
        <id>P55210</id>
    </interactant>
    <interactant intactId="EBI-9090282">
        <id>P27986-2</id>
        <label>PIK3R1</label>
    </interactant>
    <organismsDiffer>false</organismsDiffer>
    <experiments>3</experiments>
</comment>
<comment type="interaction">
    <interactant intactId="EBI-523958">
        <id>P55210</id>
    </interactant>
    <interactant intactId="EBI-711613">
        <id>P21673</id>
        <label>SAT1</label>
    </interactant>
    <organismsDiffer>false</organismsDiffer>
    <experiments>6</experiments>
</comment>
<comment type="interaction">
    <interactant intactId="EBI-523958">
        <id>P55210</id>
    </interactant>
    <interactant intactId="EBI-11995314">
        <id>Q86WV1-2</id>
        <label>SKAP1</label>
    </interactant>
    <organismsDiffer>false</organismsDiffer>
    <experiments>3</experiments>
</comment>
<comment type="interaction">
    <interactant intactId="EBI-523958">
        <id>P55210</id>
    </interactant>
    <interactant intactId="EBI-7095800">
        <id>P17405</id>
        <label>SMPD1</label>
    </interactant>
    <organismsDiffer>false</organismsDiffer>
    <experiments>6</experiments>
</comment>
<comment type="interaction">
    <interactant intactId="EBI-523958">
        <id>P55210</id>
    </interactant>
    <interactant intactId="EBI-517127">
        <id>P98170</id>
        <label>XIAP</label>
    </interactant>
    <organismsDiffer>false</organismsDiffer>
    <experiments>5</experiments>
</comment>
<comment type="subcellular location">
    <subcellularLocation>
        <location evidence="9 61 64">Cytoplasm</location>
        <location evidence="9 61 64">Cytosol</location>
    </subcellularLocation>
    <subcellularLocation>
        <location evidence="21 25">Nucleus</location>
    </subcellularLocation>
    <subcellularLocation>
        <location evidence="1">Secreted</location>
        <location evidence="1">Extracellular space</location>
    </subcellularLocation>
    <text evidence="1">Following cleavage and activation by CASP1 or granzyme B (GZMB), secreted into the extracellular milieu by passing through the gasdermin-D (GSDMD) pores or perforin (PRF1) pore, respectively.</text>
</comment>
<comment type="alternative products">
    <event type="alternative splicing"/>
    <isoform>
        <id>P55210-1</id>
        <name evidence="54">Alpha</name>
        <sequence type="displayed"/>
    </isoform>
    <isoform>
        <id>P55210-2</id>
        <name evidence="54">Beta</name>
        <sequence type="described" ref="VSP_000807"/>
    </isoform>
    <isoform>
        <id>P55210-3</id>
        <name evidence="57">Alpha'</name>
        <name evidence="57">Beta</name>
        <sequence type="described" ref="VSP_000806"/>
    </isoform>
    <isoform>
        <id>P55210-4</id>
        <name>4</name>
        <sequence type="described" ref="VSP_045325"/>
    </isoform>
</comment>
<comment type="tissue specificity">
    <text evidence="45">Highly expressed in lung, skeletal muscle, liver, kidney, spleen and heart, and moderately in testis. No expression in the brain.</text>
</comment>
<comment type="domain">
    <text evidence="27 37 38">The exosite polybasic region mediates non-specific RNA-binding, acting as a bridge for RNA-binding target proteins, such as PARP1 (PubMed:22451931, PubMed:31586028, PubMed:34156061). The exosite is also required for interaction with non-RNA-binding proteins, such as Hsp90 co-chaperone PTGES3 (PubMed:34156061).</text>
</comment>
<comment type="PTM">
    <text evidence="1 9 14 16 21 25 34 39 40 47 49">Cleavage by different proteases, such as granzyme B (GZMB), caspase-1 (CASP1), caspase-8 (CASP8), caspase-9 (CASP9) or caspase-10 (CASP10) generate the two active subunits (PubMed:12824163, PubMed:16352606, PubMed:16916640, PubMed:35338844, PubMed:35446120, PubMed:9852092). Its involvement in different programmed cell death processes is probably specified by the protease that activates CASP7 (PubMed:16916640, PubMed:9852092). Cleaved and activated by initiator caspases (CASP8, CASP9 and/or CASP10), leading to execution phase of apoptosis (PubMed:16352606, PubMed:16916640, PubMed:21555521, PubMed:27889207). Cleavage and maturation by GZMB regulates granzyme-mediated programmed cell death (By similarity). Cleaved and activated by CASP1 in response to bacterial infection (By similarity). Propeptide domains can also be cleaved efficiently by CASP3 (PubMed:8755496). Active heterodimers between the small subunit of caspase-7 and the large subunit of CASP3, and vice versa, also occur (PubMed:8755496). Also cleaved at the N-terminus at alternative sites by CAPN1, leading to its activation (PubMed:19617626).</text>
</comment>
<comment type="PTM">
    <text evidence="25 34">Phosphorylation at Ser-30 and Ser-239 by PAK2 inhibits its activity (PubMed:21555521, PubMed:27889207). Phosphorylation at Ser-30 prevents cleavage and activation by initiator caspase CASP9, while phosphorylation at Ser-239 prevents thiol protease activity by preventing substrate-binding (PubMed:21555521, PubMed:27889207).</text>
</comment>
<comment type="PTM">
    <text evidence="39 40">(Microbial infection) ADP-riboxanation by C.violaceum CopC blocks CASP7 processing, preventing CASP7 activation and ability to recognize and cleave substrates.</text>
</comment>
<comment type="PTM">
    <text evidence="41 42">Ubiquitinated by BIRC6; this activity is inhibited by DIABLO/SMAC.</text>
</comment>
<comment type="similarity">
    <text evidence="58">Belongs to the peptidase C14A family.</text>
</comment>
<comment type="online information" name="Protein Spotlight">
    <link uri="https://www.proteinspotlight.org/back_issues/252/"/>
    <text>Delayed - Issue 252 of November 2022</text>
</comment>
<accession>P55210</accession>
<accession>B4DQU7</accession>
<accession>B5BU45</accession>
<accession>D3DRB8</accession>
<accession>Q13364</accession>
<accession>Q53YD5</accession>
<accession>Q5SVL0</accession>
<accession>Q5SVL3</accession>
<accession>Q96BA0</accession>
<reference key="1">
    <citation type="journal article" date="1995" name="Cancer Res.">
        <title>Mch3, a novel human apoptotic cysteine protease highly related to CPP32.</title>
        <authorList>
            <person name="Fernandes-Alnemri T."/>
            <person name="Takahashi A."/>
            <person name="Armstrong R.C."/>
            <person name="Krebs J."/>
            <person name="Fritz L.C."/>
            <person name="Tomaselli K.J."/>
            <person name="Wang L."/>
            <person name="Yu Z."/>
            <person name="Croce C.M."/>
            <person name="Salveson G."/>
            <person name="Earnshaw W.C."/>
            <person name="Litwack G."/>
            <person name="Alnemri E.S."/>
        </authorList>
    </citation>
    <scope>NUCLEOTIDE SEQUENCE [MRNA] (ISOFORMS ALPHA AND BETA)</scope>
    <scope>FUNCTION</scope>
    <source>
        <tissue>T-cell</tissue>
    </source>
</reference>
<reference key="2">
    <citation type="journal article" date="1996" name="J. Biol. Chem.">
        <title>ICE-LAP3, a novel mammalian homologue of the Caenorhabditis elegans cell death protein Ced-3 is activated during Fas- and tumor necrosis factor-induced apoptosis.</title>
        <authorList>
            <person name="Duan H."/>
            <person name="Chinnaiyan A.M."/>
            <person name="Hudson P.L."/>
            <person name="Wing J.P."/>
            <person name="He W.-W."/>
            <person name="Dixit V.M."/>
        </authorList>
    </citation>
    <scope>NUCLEOTIDE SEQUENCE [MRNA] (ISOFORM ALPHA)</scope>
    <scope>FUNCTION</scope>
    <scope>SUBCELLULAR LOCATION</scope>
    <scope>TISSUE SPECIFICITY</scope>
    <scope>MUTAGENESIS OF CYS-186</scope>
</reference>
<reference key="3">
    <citation type="journal article" date="1996" name="J. Biol. Chem.">
        <title>Identification and characterization of CPP32/Mch2 homolog 1, a novel cysteine protease similar to CPP32.</title>
        <authorList>
            <person name="Lippke J.A."/>
            <person name="Gu Y."/>
            <person name="Sarnecki C."/>
            <person name="Caron P.R."/>
            <person name="Su M.S.-S."/>
        </authorList>
    </citation>
    <scope>NUCLEOTIDE SEQUENCE [MRNA] (ISOFORM ALPHA)</scope>
    <scope>FUNCTION</scope>
    <source>
        <tissue>Spleen</tissue>
    </source>
</reference>
<reference key="4">
    <citation type="journal article" date="1997" name="Genomics">
        <title>Identification and mapping of Casp7, a cysteine protease resembling CPP32 beta, interleukin-1 beta converting enzyme, and CED-3.</title>
        <authorList>
            <person name="Juan T.S.-C."/>
            <person name="McNiece I.K."/>
            <person name="Argento J.M."/>
            <person name="Jenkins N.A."/>
            <person name="Gilbert D.J."/>
            <person name="Copeland N.G."/>
            <person name="Fletcher F.A."/>
        </authorList>
    </citation>
    <scope>NUCLEOTIDE SEQUENCE [MRNA] (ISOFORMS ALPHA AND ALPHA')</scope>
    <scope>FUNCTION</scope>
    <source>
        <tissue>Fetal lung</tissue>
        <tissue>Fetal spleen</tissue>
    </source>
</reference>
<reference key="5">
    <citation type="submission" date="2003-05" db="EMBL/GenBank/DDBJ databases">
        <title>Cloning of human full-length CDSs in BD Creator(TM) system donor vector.</title>
        <authorList>
            <person name="Kalnine N."/>
            <person name="Chen X."/>
            <person name="Rolfs A."/>
            <person name="Halleck A."/>
            <person name="Hines L."/>
            <person name="Eisenstein S."/>
            <person name="Koundinya M."/>
            <person name="Raphael J."/>
            <person name="Moreira D."/>
            <person name="Kelley T."/>
            <person name="LaBaer J."/>
            <person name="Lin Y."/>
            <person name="Phelan M."/>
            <person name="Farmer A."/>
        </authorList>
    </citation>
    <scope>NUCLEOTIDE SEQUENCE [LARGE SCALE MRNA] (ISOFORM ALPHA)</scope>
    <scope>VARIANT GLU-4</scope>
</reference>
<reference key="6">
    <citation type="journal article" date="2008" name="Nat. Methods">
        <title>Human protein factory for converting the transcriptome into an in vitro-expressed proteome.</title>
        <authorList>
            <person name="Goshima N."/>
            <person name="Kawamura Y."/>
            <person name="Fukumoto A."/>
            <person name="Miura A."/>
            <person name="Honma R."/>
            <person name="Satoh R."/>
            <person name="Wakamatsu A."/>
            <person name="Yamamoto J."/>
            <person name="Kimura K."/>
            <person name="Nishikawa T."/>
            <person name="Andoh T."/>
            <person name="Iida Y."/>
            <person name="Ishikawa K."/>
            <person name="Ito E."/>
            <person name="Kagawa N."/>
            <person name="Kaminaga C."/>
            <person name="Kanehori K."/>
            <person name="Kawakami B."/>
            <person name="Kenmochi K."/>
            <person name="Kimura R."/>
            <person name="Kobayashi M."/>
            <person name="Kuroita T."/>
            <person name="Kuwayama H."/>
            <person name="Maruyama Y."/>
            <person name="Matsuo K."/>
            <person name="Minami K."/>
            <person name="Mitsubori M."/>
            <person name="Mori M."/>
            <person name="Morishita R."/>
            <person name="Murase A."/>
            <person name="Nishikawa A."/>
            <person name="Nishikawa S."/>
            <person name="Okamoto T."/>
            <person name="Sakagami N."/>
            <person name="Sakamoto Y."/>
            <person name="Sasaki Y."/>
            <person name="Seki T."/>
            <person name="Sono S."/>
            <person name="Sugiyama A."/>
            <person name="Sumiya T."/>
            <person name="Takayama T."/>
            <person name="Takayama Y."/>
            <person name="Takeda H."/>
            <person name="Togashi T."/>
            <person name="Yahata K."/>
            <person name="Yamada H."/>
            <person name="Yanagisawa Y."/>
            <person name="Endo Y."/>
            <person name="Imamoto F."/>
            <person name="Kisu Y."/>
            <person name="Tanaka S."/>
            <person name="Isogai T."/>
            <person name="Imai J."/>
            <person name="Watanabe S."/>
            <person name="Nomura N."/>
        </authorList>
    </citation>
    <scope>NUCLEOTIDE SEQUENCE [LARGE SCALE MRNA] (ISOFORM ALPHA')</scope>
</reference>
<reference key="7">
    <citation type="journal article" date="2004" name="Nat. Genet.">
        <title>Complete sequencing and characterization of 21,243 full-length human cDNAs.</title>
        <authorList>
            <person name="Ota T."/>
            <person name="Suzuki Y."/>
            <person name="Nishikawa T."/>
            <person name="Otsuki T."/>
            <person name="Sugiyama T."/>
            <person name="Irie R."/>
            <person name="Wakamatsu A."/>
            <person name="Hayashi K."/>
            <person name="Sato H."/>
            <person name="Nagai K."/>
            <person name="Kimura K."/>
            <person name="Makita H."/>
            <person name="Sekine M."/>
            <person name="Obayashi M."/>
            <person name="Nishi T."/>
            <person name="Shibahara T."/>
            <person name="Tanaka T."/>
            <person name="Ishii S."/>
            <person name="Yamamoto J."/>
            <person name="Saito K."/>
            <person name="Kawai Y."/>
            <person name="Isono Y."/>
            <person name="Nakamura Y."/>
            <person name="Nagahari K."/>
            <person name="Murakami K."/>
            <person name="Yasuda T."/>
            <person name="Iwayanagi T."/>
            <person name="Wagatsuma M."/>
            <person name="Shiratori A."/>
            <person name="Sudo H."/>
            <person name="Hosoiri T."/>
            <person name="Kaku Y."/>
            <person name="Kodaira H."/>
            <person name="Kondo H."/>
            <person name="Sugawara M."/>
            <person name="Takahashi M."/>
            <person name="Kanda K."/>
            <person name="Yokoi T."/>
            <person name="Furuya T."/>
            <person name="Kikkawa E."/>
            <person name="Omura Y."/>
            <person name="Abe K."/>
            <person name="Kamihara K."/>
            <person name="Katsuta N."/>
            <person name="Sato K."/>
            <person name="Tanikawa M."/>
            <person name="Yamazaki M."/>
            <person name="Ninomiya K."/>
            <person name="Ishibashi T."/>
            <person name="Yamashita H."/>
            <person name="Murakawa K."/>
            <person name="Fujimori K."/>
            <person name="Tanai H."/>
            <person name="Kimata M."/>
            <person name="Watanabe M."/>
            <person name="Hiraoka S."/>
            <person name="Chiba Y."/>
            <person name="Ishida S."/>
            <person name="Ono Y."/>
            <person name="Takiguchi S."/>
            <person name="Watanabe S."/>
            <person name="Yosida M."/>
            <person name="Hotuta T."/>
            <person name="Kusano J."/>
            <person name="Kanehori K."/>
            <person name="Takahashi-Fujii A."/>
            <person name="Hara H."/>
            <person name="Tanase T.-O."/>
            <person name="Nomura Y."/>
            <person name="Togiya S."/>
            <person name="Komai F."/>
            <person name="Hara R."/>
            <person name="Takeuchi K."/>
            <person name="Arita M."/>
            <person name="Imose N."/>
            <person name="Musashino K."/>
            <person name="Yuuki H."/>
            <person name="Oshima A."/>
            <person name="Sasaki N."/>
            <person name="Aotsuka S."/>
            <person name="Yoshikawa Y."/>
            <person name="Matsunawa H."/>
            <person name="Ichihara T."/>
            <person name="Shiohata N."/>
            <person name="Sano S."/>
            <person name="Moriya S."/>
            <person name="Momiyama H."/>
            <person name="Satoh N."/>
            <person name="Takami S."/>
            <person name="Terashima Y."/>
            <person name="Suzuki O."/>
            <person name="Nakagawa S."/>
            <person name="Senoh A."/>
            <person name="Mizoguchi H."/>
            <person name="Goto Y."/>
            <person name="Shimizu F."/>
            <person name="Wakebe H."/>
            <person name="Hishigaki H."/>
            <person name="Watanabe T."/>
            <person name="Sugiyama A."/>
            <person name="Takemoto M."/>
            <person name="Kawakami B."/>
            <person name="Yamazaki M."/>
            <person name="Watanabe K."/>
            <person name="Kumagai A."/>
            <person name="Itakura S."/>
            <person name="Fukuzumi Y."/>
            <person name="Fujimori Y."/>
            <person name="Komiyama M."/>
            <person name="Tashiro H."/>
            <person name="Tanigami A."/>
            <person name="Fujiwara T."/>
            <person name="Ono T."/>
            <person name="Yamada K."/>
            <person name="Fujii Y."/>
            <person name="Ozaki K."/>
            <person name="Hirao M."/>
            <person name="Ohmori Y."/>
            <person name="Kawabata A."/>
            <person name="Hikiji T."/>
            <person name="Kobatake N."/>
            <person name="Inagaki H."/>
            <person name="Ikema Y."/>
            <person name="Okamoto S."/>
            <person name="Okitani R."/>
            <person name="Kawakami T."/>
            <person name="Noguchi S."/>
            <person name="Itoh T."/>
            <person name="Shigeta K."/>
            <person name="Senba T."/>
            <person name="Matsumura K."/>
            <person name="Nakajima Y."/>
            <person name="Mizuno T."/>
            <person name="Morinaga M."/>
            <person name="Sasaki M."/>
            <person name="Togashi T."/>
            <person name="Oyama M."/>
            <person name="Hata H."/>
            <person name="Watanabe M."/>
            <person name="Komatsu T."/>
            <person name="Mizushima-Sugano J."/>
            <person name="Satoh T."/>
            <person name="Shirai Y."/>
            <person name="Takahashi Y."/>
            <person name="Nakagawa K."/>
            <person name="Okumura K."/>
            <person name="Nagase T."/>
            <person name="Nomura N."/>
            <person name="Kikuchi H."/>
            <person name="Masuho Y."/>
            <person name="Yamashita R."/>
            <person name="Nakai K."/>
            <person name="Yada T."/>
            <person name="Nakamura Y."/>
            <person name="Ohara O."/>
            <person name="Isogai T."/>
            <person name="Sugano S."/>
        </authorList>
    </citation>
    <scope>NUCLEOTIDE SEQUENCE [LARGE SCALE MRNA] (ISOFORM 4)</scope>
</reference>
<reference key="8">
    <citation type="journal article" date="2004" name="Nature">
        <title>The DNA sequence and comparative analysis of human chromosome 10.</title>
        <authorList>
            <person name="Deloukas P."/>
            <person name="Earthrowl M.E."/>
            <person name="Grafham D.V."/>
            <person name="Rubenfield M."/>
            <person name="French L."/>
            <person name="Steward C.A."/>
            <person name="Sims S.K."/>
            <person name="Jones M.C."/>
            <person name="Searle S."/>
            <person name="Scott C."/>
            <person name="Howe K."/>
            <person name="Hunt S.E."/>
            <person name="Andrews T.D."/>
            <person name="Gilbert J.G.R."/>
            <person name="Swarbreck D."/>
            <person name="Ashurst J.L."/>
            <person name="Taylor A."/>
            <person name="Battles J."/>
            <person name="Bird C.P."/>
            <person name="Ainscough R."/>
            <person name="Almeida J.P."/>
            <person name="Ashwell R.I.S."/>
            <person name="Ambrose K.D."/>
            <person name="Babbage A.K."/>
            <person name="Bagguley C.L."/>
            <person name="Bailey J."/>
            <person name="Banerjee R."/>
            <person name="Bates K."/>
            <person name="Beasley H."/>
            <person name="Bray-Allen S."/>
            <person name="Brown A.J."/>
            <person name="Brown J.Y."/>
            <person name="Burford D.C."/>
            <person name="Burrill W."/>
            <person name="Burton J."/>
            <person name="Cahill P."/>
            <person name="Camire D."/>
            <person name="Carter N.P."/>
            <person name="Chapman J.C."/>
            <person name="Clark S.Y."/>
            <person name="Clarke G."/>
            <person name="Clee C.M."/>
            <person name="Clegg S."/>
            <person name="Corby N."/>
            <person name="Coulson A."/>
            <person name="Dhami P."/>
            <person name="Dutta I."/>
            <person name="Dunn M."/>
            <person name="Faulkner L."/>
            <person name="Frankish A."/>
            <person name="Frankland J.A."/>
            <person name="Garner P."/>
            <person name="Garnett J."/>
            <person name="Gribble S."/>
            <person name="Griffiths C."/>
            <person name="Grocock R."/>
            <person name="Gustafson E."/>
            <person name="Hammond S."/>
            <person name="Harley J.L."/>
            <person name="Hart E."/>
            <person name="Heath P.D."/>
            <person name="Ho T.P."/>
            <person name="Hopkins B."/>
            <person name="Horne J."/>
            <person name="Howden P.J."/>
            <person name="Huckle E."/>
            <person name="Hynds C."/>
            <person name="Johnson C."/>
            <person name="Johnson D."/>
            <person name="Kana A."/>
            <person name="Kay M."/>
            <person name="Kimberley A.M."/>
            <person name="Kershaw J.K."/>
            <person name="Kokkinaki M."/>
            <person name="Laird G.K."/>
            <person name="Lawlor S."/>
            <person name="Lee H.M."/>
            <person name="Leongamornlert D.A."/>
            <person name="Laird G."/>
            <person name="Lloyd C."/>
            <person name="Lloyd D.M."/>
            <person name="Loveland J."/>
            <person name="Lovell J."/>
            <person name="McLaren S."/>
            <person name="McLay K.E."/>
            <person name="McMurray A."/>
            <person name="Mashreghi-Mohammadi M."/>
            <person name="Matthews L."/>
            <person name="Milne S."/>
            <person name="Nickerson T."/>
            <person name="Nguyen M."/>
            <person name="Overton-Larty E."/>
            <person name="Palmer S.A."/>
            <person name="Pearce A.V."/>
            <person name="Peck A.I."/>
            <person name="Pelan S."/>
            <person name="Phillimore B."/>
            <person name="Porter K."/>
            <person name="Rice C.M."/>
            <person name="Rogosin A."/>
            <person name="Ross M.T."/>
            <person name="Sarafidou T."/>
            <person name="Sehra H.K."/>
            <person name="Shownkeen R."/>
            <person name="Skuce C.D."/>
            <person name="Smith M."/>
            <person name="Standring L."/>
            <person name="Sycamore N."/>
            <person name="Tester J."/>
            <person name="Thorpe A."/>
            <person name="Torcasso W."/>
            <person name="Tracey A."/>
            <person name="Tromans A."/>
            <person name="Tsolas J."/>
            <person name="Wall M."/>
            <person name="Walsh J."/>
            <person name="Wang H."/>
            <person name="Weinstock K."/>
            <person name="West A.P."/>
            <person name="Willey D.L."/>
            <person name="Whitehead S.L."/>
            <person name="Wilming L."/>
            <person name="Wray P.W."/>
            <person name="Young L."/>
            <person name="Chen Y."/>
            <person name="Lovering R.C."/>
            <person name="Moschonas N.K."/>
            <person name="Siebert R."/>
            <person name="Fechtel K."/>
            <person name="Bentley D."/>
            <person name="Durbin R.M."/>
            <person name="Hubbard T."/>
            <person name="Doucette-Stamm L."/>
            <person name="Beck S."/>
            <person name="Smith D.R."/>
            <person name="Rogers J."/>
        </authorList>
    </citation>
    <scope>NUCLEOTIDE SEQUENCE [LARGE SCALE GENOMIC DNA]</scope>
</reference>
<reference key="9">
    <citation type="submission" date="2005-09" db="EMBL/GenBank/DDBJ databases">
        <authorList>
            <person name="Mural R.J."/>
            <person name="Istrail S."/>
            <person name="Sutton G.G."/>
            <person name="Florea L."/>
            <person name="Halpern A.L."/>
            <person name="Mobarry C.M."/>
            <person name="Lippert R."/>
            <person name="Walenz B."/>
            <person name="Shatkay H."/>
            <person name="Dew I."/>
            <person name="Miller J.R."/>
            <person name="Flanigan M.J."/>
            <person name="Edwards N.J."/>
            <person name="Bolanos R."/>
            <person name="Fasulo D."/>
            <person name="Halldorsson B.V."/>
            <person name="Hannenhalli S."/>
            <person name="Turner R."/>
            <person name="Yooseph S."/>
            <person name="Lu F."/>
            <person name="Nusskern D.R."/>
            <person name="Shue B.C."/>
            <person name="Zheng X.H."/>
            <person name="Zhong F."/>
            <person name="Delcher A.L."/>
            <person name="Huson D.H."/>
            <person name="Kravitz S.A."/>
            <person name="Mouchard L."/>
            <person name="Reinert K."/>
            <person name="Remington K.A."/>
            <person name="Clark A.G."/>
            <person name="Waterman M.S."/>
            <person name="Eichler E.E."/>
            <person name="Adams M.D."/>
            <person name="Hunkapiller M.W."/>
            <person name="Myers E.W."/>
            <person name="Venter J.C."/>
        </authorList>
    </citation>
    <scope>NUCLEOTIDE SEQUENCE [LARGE SCALE GENOMIC DNA]</scope>
</reference>
<reference key="10">
    <citation type="journal article" date="2004" name="Genome Res.">
        <title>The status, quality, and expansion of the NIH full-length cDNA project: the Mammalian Gene Collection (MGC).</title>
        <authorList>
            <consortium name="The MGC Project Team"/>
        </authorList>
    </citation>
    <scope>NUCLEOTIDE SEQUENCE [LARGE SCALE MRNA] (ISOFORM ALPHA)</scope>
    <scope>VARIANT GLU-4</scope>
    <source>
        <tissue>Skin</tissue>
    </source>
</reference>
<reference key="11">
    <citation type="journal article" date="1996" name="Proc. Natl. Acad. Sci. U.S.A.">
        <title>Purification and cDNA cloning of a second apoptosis-related cysteine protease that cleaves and activates sterol regulatory element binding proteins.</title>
        <authorList>
            <person name="Pai J.-T."/>
            <person name="Brown M.S."/>
            <person name="Goldstein J.L."/>
        </authorList>
    </citation>
    <scope>FUNCTION</scope>
</reference>
<reference key="12">
    <citation type="journal article" date="1996" name="Proc. Natl. Acad. Sci. U.S.A.">
        <title>In vitro activation of CPP32 and Mch3 by Mch4, a novel human apoptotic cysteine protease containing two FADD-like domains.</title>
        <authorList>
            <person name="Fernandes-Alnemri T."/>
            <person name="Armstrong R.C."/>
            <person name="Krebs J.F."/>
            <person name="Srinivasula S.M."/>
            <person name="Wang L."/>
            <person name="Bullrich F."/>
            <person name="Fritz L.C."/>
            <person name="Trapani J.A."/>
            <person name="Tomaselli K.J."/>
            <person name="Litwack G."/>
            <person name="Alnemri E.S."/>
        </authorList>
    </citation>
    <scope>PROTEOLYTIC PROCESSING</scope>
</reference>
<reference key="13">
    <citation type="journal article" date="1998" name="J. Biol. Chem.">
        <title>Granzyme B mimics apical caspases. Description of a unified pathway for trans-activation of executioner caspase-3 and -7.</title>
        <authorList>
            <person name="Yang X."/>
            <person name="Stennicke H.R."/>
            <person name="Wang B."/>
            <person name="Green D.R."/>
            <person name="Jaenicke R.U."/>
            <person name="Srinivasan A."/>
            <person name="Seth P."/>
            <person name="Salvesen G.S."/>
            <person name="Froelich C.J."/>
        </authorList>
    </citation>
    <scope>PROTEOLYTIC CLEAVAGE</scope>
</reference>
<reference key="14">
    <citation type="journal article" date="1999" name="J. Biol. Chem.">
        <title>Cleavage of automodified poly(ADP-ribose) polymerase during apoptosis. Evidence for involvement of caspase-7.</title>
        <authorList>
            <person name="Germain M."/>
            <person name="Affar E.B."/>
            <person name="D'Amours D."/>
            <person name="Dixit V.M."/>
            <person name="Salvesen G.S."/>
            <person name="Poirier G.G."/>
        </authorList>
    </citation>
    <scope>FUNCTION</scope>
    <scope>CATALYTIC ACTIVITY</scope>
</reference>
<reference key="15">
    <citation type="journal article" date="2000" name="J. Biol. Chem.">
        <title>Potent and selective nonpeptide inhibitors of caspases 3 and 7 inhibit apoptosis and maintain cell functionality.</title>
        <authorList>
            <person name="Lee D."/>
            <person name="Long S.A."/>
            <person name="Adams J.L."/>
            <person name="Chan G."/>
            <person name="Vaidya K.S."/>
            <person name="Francis T.A."/>
            <person name="Kikly K."/>
            <person name="Winkler J.D."/>
            <person name="Sung C.-M."/>
            <person name="Debouck C."/>
            <person name="Richardson S."/>
            <person name="Levy M.A."/>
            <person name="DeWolf W.E. Jr."/>
            <person name="Keller P.M."/>
            <person name="Tomaszek T."/>
            <person name="Head M.S."/>
            <person name="Ryan M.D."/>
            <person name="Haltiwanger R.C."/>
            <person name="Liang P.-H."/>
            <person name="Janson C.A."/>
            <person name="McDevitt P.J."/>
            <person name="Johanson K."/>
            <person name="Concha N.O."/>
            <person name="Chan W."/>
            <person name="Abdel-Meguid S.S."/>
            <person name="Badger A.M."/>
            <person name="Lark M.W."/>
            <person name="Nadeau D.P."/>
            <person name="Suva L.J."/>
            <person name="Gowen M."/>
            <person name="Nuttall M.E."/>
        </authorList>
    </citation>
    <scope>ACTIVITY REGULATION</scope>
</reference>
<reference key="16">
    <citation type="journal article" date="2003" name="J. Biol. Chem.">
        <title>Human caspase-7 activity and regulation by its N-terminal peptide.</title>
        <authorList>
            <person name="Denault J.B."/>
            <person name="Salvesen G.S."/>
        </authorList>
    </citation>
    <scope>FUNCTION</scope>
    <scope>CATALYTIC ACTIVITY</scope>
    <scope>ACTIVITY REGULATION</scope>
    <scope>SUBCELLULAR LOCATION</scope>
    <scope>MUTAGENESIS OF ASP-23; CYS-186; ASP-198 AND ASP-206</scope>
</reference>
<reference key="17">
    <citation type="journal article" date="2004" name="Mol. Cell">
        <title>Dual role of BRUCE as an antiapoptotic IAP and a chimeric E2/E3 ubiquitin ligase.</title>
        <authorList>
            <person name="Bartke T."/>
            <person name="Pohl C."/>
            <person name="Pyrowolakis G."/>
            <person name="Jentsch S."/>
        </authorList>
    </citation>
    <scope>INTERACTION WITH BIRC6/BRUCE</scope>
</reference>
<reference key="18">
    <citation type="journal article" date="2005" name="J. Biol. Chem.">
        <title>Cleavage of claspin by caspase-7 during apoptosis inhibits the Chk1 pathway.</title>
        <authorList>
            <person name="Clarke C.A."/>
            <person name="Bennett L.N."/>
            <person name="Clarke P.R."/>
        </authorList>
    </citation>
    <scope>FUNCTION</scope>
    <scope>CATALYTIC ACTIVITY</scope>
</reference>
<reference key="19">
    <citation type="journal article" date="2006" name="Apoptosis">
        <title>Nuclear caspase-3 and caspase-7 activation, and poly(ADP-ribose) polymerase cleavage are early events in camptothecin-induced apoptosis.</title>
        <authorList>
            <person name="Rodriguez-Hernandez A."/>
            <person name="Brea-Calvo G."/>
            <person name="Fernandez-Ayala D.J."/>
            <person name="Cordero M."/>
            <person name="Navas P."/>
            <person name="Sanchez-Alcazar J.A."/>
        </authorList>
    </citation>
    <scope>FUNCTION</scope>
    <scope>CATALYTIC ACTIVITY</scope>
</reference>
<reference key="20">
    <citation type="journal article" date="2006" name="J. Biol. Chem.">
        <title>Caspase-7 is directly activated by the approximately 700-kDa apoptosome complex and is released as a stable XIAP-caspase-7 approximately 200-kDa complex.</title>
        <authorList>
            <person name="Twiddy D."/>
            <person name="Cohen G.M."/>
            <person name="Macfarlane M."/>
            <person name="Cain K."/>
        </authorList>
    </citation>
    <scope>ACTIVITY REGULATION</scope>
    <scope>INTERACTION WITH XIAP</scope>
    <scope>PROTEOLYTIC CLEAVAGE</scope>
</reference>
<reference key="21">
    <citation type="journal article" date="2006" name="Mol. Cell">
        <title>Engineered hybrid dimers: tracking the activation pathway of caspase-7.</title>
        <authorList>
            <person name="Denault J.B."/>
            <person name="Bekes M."/>
            <person name="Scott F.L."/>
            <person name="Sexton K.M."/>
            <person name="Bogyo M."/>
            <person name="Salvesen G.S."/>
        </authorList>
    </citation>
    <scope>FUNCTION</scope>
    <scope>CATALYTIC ACTIVITY</scope>
    <scope>ACTIVITY REGULATION</scope>
    <scope>SUBUNIT</scope>
    <scope>INTERACTION WITH XIAP</scope>
    <scope>PROTEOLYTIC CLEAVAGE</scope>
    <scope>MUTAGENESIS OF CYS-186; ASP-192; ASP-198 AND ASP-206</scope>
</reference>
<reference key="22">
    <citation type="journal article" date="2007" name="J. Biol. Chem.">
        <title>Proteolytic cleavage of ataxin-7 by caspase-7 modulates cellular toxicity and transcriptional dysregulation.</title>
        <authorList>
            <person name="Young J.E."/>
            <person name="Gouw L."/>
            <person name="Propp S."/>
            <person name="Sopher B.L."/>
            <person name="Taylor J."/>
            <person name="Lin A."/>
            <person name="Hermel E."/>
            <person name="Logvinova A."/>
            <person name="Chen S.F."/>
            <person name="Chen S."/>
            <person name="Bredesen D.E."/>
            <person name="Truant R."/>
            <person name="Ptacek L.J."/>
            <person name="La Spada A.R."/>
            <person name="Ellerby L.M."/>
        </authorList>
    </citation>
    <scope>FUNCTION</scope>
    <scope>CATALYTIC ACTIVITY</scope>
</reference>
<reference key="23">
    <citation type="journal article" date="2008" name="Proc. Natl. Acad. Sci. U.S.A.">
        <title>Executioner caspase-3 and caspase-7 are functionally distinct proteases.</title>
        <authorList>
            <person name="Walsh J.G."/>
            <person name="Cullen S.P."/>
            <person name="Sheridan C."/>
            <person name="Luethi A.U."/>
            <person name="Gerner C."/>
            <person name="Martin S.J."/>
        </authorList>
    </citation>
    <scope>FUNCTION</scope>
    <scope>CATALYTIC ACTIVITY</scope>
</reference>
<reference key="24">
    <citation type="journal article" date="2009" name="Anal. Chem.">
        <title>Lys-N and trypsin cover complementary parts of the phosphoproteome in a refined SCX-based approach.</title>
        <authorList>
            <person name="Gauci S."/>
            <person name="Helbig A.O."/>
            <person name="Slijper M."/>
            <person name="Krijgsveld J."/>
            <person name="Heck A.J."/>
            <person name="Mohammed S."/>
        </authorList>
    </citation>
    <scope>ACETYLATION [LARGE SCALE ANALYSIS] AT ALA-2</scope>
    <scope>CLEAVAGE OF INITIATOR METHIONINE [LARGE SCALE ANALYSIS]</scope>
    <scope>IDENTIFICATION BY MASS SPECTROMETRY [LARGE SCALE ANALYSIS]</scope>
</reference>
<reference key="25">
    <citation type="journal article" date="2009" name="J. Biol. Chem.">
        <title>Calpain-1 cleaves and activates caspase-7.</title>
        <authorList>
            <person name="Gafni J."/>
            <person name="Cong X."/>
            <person name="Chen S.F."/>
            <person name="Gibson B.W."/>
            <person name="Ellerby L.M."/>
        </authorList>
    </citation>
    <scope>CATALYTIC ACTIVITY</scope>
    <scope>SUBCELLULAR LOCATION</scope>
    <scope>PROTEOLYTIC CLEAVAGE</scope>
    <scope>ACTIVITY REGULATION</scope>
</reference>
<reference key="26">
    <citation type="journal article" date="2009" name="J. Biol. Chem.">
        <title>Dissecting an allosteric switch in caspase-7 using chemical and mutational probes.</title>
        <authorList>
            <person name="Hardy J.A."/>
            <person name="Wells J.A."/>
        </authorList>
    </citation>
    <scope>FUNCTION</scope>
    <scope>CATALYTIC ACTIVITY</scope>
    <scope>BIOPHYSICOCHEMICAL PROPERTIES</scope>
    <scope>ACTIVITY REGULATION</scope>
    <scope>MUTAGENESIS OF ARG-187; TYR-223; TYR-229 AND CYS-290</scope>
</reference>
<reference key="27">
    <citation type="journal article" date="2010" name="J. Biol. Chem.">
        <title>Caspase-7 cleavage of Kaposi sarcoma-associated herpesvirus ORF57 confers a cellular function against viral lytic gene expression.</title>
        <authorList>
            <person name="Majerciak V."/>
            <person name="Kruhlak M."/>
            <person name="Dagur P.K."/>
            <person name="McCoy J.P. Jr."/>
            <person name="Zheng Z.M."/>
        </authorList>
    </citation>
    <scope>FUNCTION</scope>
</reference>
<reference key="28">
    <citation type="journal article" date="2010" name="J. Biol. Chem.">
        <title>Identification of functional regions defining different activity in caspase-3 and caspase-7 within cells.</title>
        <authorList>
            <person name="Nakatsumi H."/>
            <person name="Yonehara S."/>
        </authorList>
    </citation>
    <scope>FUNCTION</scope>
    <scope>CATALYTIC ACTIVITY</scope>
    <scope>SUBUNIT</scope>
</reference>
<reference key="29">
    <citation type="journal article" date="2011" name="BMC Syst. Biol.">
        <title>Initial characterization of the human central proteome.</title>
        <authorList>
            <person name="Burkard T.R."/>
            <person name="Planyavsky M."/>
            <person name="Kaupe I."/>
            <person name="Breitwieser F.P."/>
            <person name="Buerckstuemmer T."/>
            <person name="Bennett K.L."/>
            <person name="Superti-Furga G."/>
            <person name="Colinge J."/>
        </authorList>
    </citation>
    <scope>IDENTIFICATION BY MASS SPECTROMETRY [LARGE SCALE ANALYSIS]</scope>
</reference>
<reference key="30">
    <citation type="journal article" date="2011" name="EMBO J.">
        <title>Caspase-8 and caspase-7 sequentially mediate proteolytic activation of acid sphingomyelinase in TNF-R1 receptosomes.</title>
        <authorList>
            <person name="Edelmann B."/>
            <person name="Bertsch U."/>
            <person name="Tchikov V."/>
            <person name="Winoto-Morbach S."/>
            <person name="Perrotta C."/>
            <person name="Jakob M."/>
            <person name="Adam-Klages S."/>
            <person name="Kabelitz D."/>
            <person name="Schuetze S."/>
        </authorList>
    </citation>
    <scope>FUNCTION</scope>
</reference>
<reference key="31">
    <citation type="journal article" date="2011" name="J. Biol. Chem.">
        <title>Phosphorylation of caspase-7 by p21-activated protein kinase (PAK) 2 inhibits chemotherapeutic drug-induced apoptosis of breast cancer cell lines.</title>
        <authorList>
            <person name="Li X."/>
            <person name="Wen W."/>
            <person name="Liu K."/>
            <person name="Zhu F."/>
            <person name="Malakhova M."/>
            <person name="Peng C."/>
            <person name="Li T."/>
            <person name="Kim H.G."/>
            <person name="Ma W."/>
            <person name="Cho Y.Y."/>
            <person name="Bode A.M."/>
            <person name="Dong Z."/>
            <person name="Dong Z."/>
        </authorList>
    </citation>
    <scope>FUNCTION</scope>
    <scope>ACTIVITY REGULATION</scope>
    <scope>SUBCELLULAR LOCATION</scope>
    <scope>PHOSPHORYLATION AT SER-30; THR-173 AND SER-239</scope>
    <scope>MUTAGENESIS OF SER-30; THR-173 AND SER-239</scope>
</reference>
<reference key="32">
    <citation type="journal article" date="2012" name="Mol. Cell">
        <title>Inflammasome-activated caspase 7 cleaves PARP1 to enhance the expression of a subset of NF-kappaB target genes.</title>
        <authorList>
            <person name="Erener S."/>
            <person name="Petrilli V."/>
            <person name="Kassner I."/>
            <person name="Minotti R."/>
            <person name="Castillo R."/>
            <person name="Santoro R."/>
            <person name="Hassa P.O."/>
            <person name="Tschopp J."/>
            <person name="Hottiger M.O."/>
        </authorList>
    </citation>
    <scope>FUNCTION</scope>
</reference>
<reference key="33">
    <citation type="journal article" date="2012" name="Mol. Cell. Biol.">
        <title>Phosphorylation of the transcription factor YY1 by CK2alpha prevents cleavage by caspase 7 during apoptosis.</title>
        <authorList>
            <person name="Riman S."/>
            <person name="Rizkallah R."/>
            <person name="Kassardjian A."/>
            <person name="Alexander K.E."/>
            <person name="Luescher B."/>
            <person name="Hurt M.M."/>
        </authorList>
    </citation>
    <scope>FUNCTION</scope>
</reference>
<reference key="34">
    <citation type="journal article" date="2012" name="Proc. Natl. Acad. Sci. U.S.A.">
        <title>Caspase-7 uses an exosite to promote poly(ADP ribose) polymerase 1 proteolysis.</title>
        <authorList>
            <person name="Boucher D."/>
            <person name="Blais V."/>
            <person name="Denault J.B."/>
        </authorList>
    </citation>
    <scope>FUNCTION</scope>
    <scope>CATALYTIC ACTIVITY</scope>
    <scope>DOMAIN</scope>
    <scope>MUTAGENESIS OF ASP-23; 38-LYS--LYS-41; 39-LYS-LYS-40 AND LYS-39</scope>
</reference>
<reference key="35">
    <citation type="journal article" date="2012" name="Mol. Cell. Proteomics">
        <title>Comparative large-scale characterisation of plant vs. mammal proteins reveals similar and idiosyncratic N-alpha acetylation features.</title>
        <authorList>
            <person name="Bienvenut W.V."/>
            <person name="Sumpton D."/>
            <person name="Martinez A."/>
            <person name="Lilla S."/>
            <person name="Espagne C."/>
            <person name="Meinnel T."/>
            <person name="Giglione C."/>
        </authorList>
    </citation>
    <scope>ACETYLATION [LARGE SCALE ANALYSIS] AT ALA-2</scope>
    <scope>CLEAVAGE OF INITIATOR METHIONINE [LARGE SCALE ANALYSIS]</scope>
    <scope>IDENTIFICATION BY MASS SPECTROMETRY [LARGE SCALE ANALYSIS]</scope>
</reference>
<reference key="36">
    <citation type="journal article" date="2013" name="J. Proteome Res.">
        <title>Toward a comprehensive characterization of a human cancer cell phosphoproteome.</title>
        <authorList>
            <person name="Zhou H."/>
            <person name="Di Palma S."/>
            <person name="Preisinger C."/>
            <person name="Peng M."/>
            <person name="Polat A.N."/>
            <person name="Heck A.J."/>
            <person name="Mohammed S."/>
        </authorList>
    </citation>
    <scope>PHOSPHORYLATION [LARGE SCALE ANALYSIS] AT SER-37</scope>
    <scope>IDENTIFICATION BY MASS SPECTROMETRY [LARGE SCALE ANALYSIS]</scope>
    <source>
        <tissue>Erythroleukemia</tissue>
    </source>
</reference>
<reference key="37">
    <citation type="journal article" date="2015" name="Cancer Res.">
        <title>KIAA1324 Suppresses Gastric Cancer Progression by Inhibiting the Oncoprotein GRP78.</title>
        <authorList>
            <person name="Kang J.M."/>
            <person name="Park S."/>
            <person name="Kim S.J."/>
            <person name="Kim H."/>
            <person name="Lee B."/>
            <person name="Kim J."/>
            <person name="Park J."/>
            <person name="Kim S.T."/>
            <person name="Yang H.K."/>
            <person name="Kim W.H."/>
            <person name="Kim S.J."/>
        </authorList>
    </citation>
    <scope>INTERACTION WITH HSPA5</scope>
</reference>
<reference key="38">
    <citation type="journal article" date="2017" name="Biochemistry">
        <title>Characterization of Hsp90 co-chaperone p23 cleavage by caspase-7 uncovers a peptidase-substrate interaction involving intrinsically disordered regions.</title>
        <authorList>
            <person name="Martini C."/>
            <person name="Bedard M."/>
            <person name="Lavigne P."/>
            <person name="Denault J.B."/>
        </authorList>
    </citation>
    <scope>FUNCTION</scope>
    <scope>MUTAGENESIS OF 38-LYS--LYS-41</scope>
</reference>
<reference key="39">
    <citation type="journal article" date="2019" name="J. Biol. Chem.">
        <title>Physiological and pathophysiological characteristics of ataxin-3 isoforms.</title>
        <authorList>
            <person name="Weishaeupl D."/>
            <person name="Schneider J."/>
            <person name="Peixoto Pinheiro B."/>
            <person name="Ruess C."/>
            <person name="Dold S.M."/>
            <person name="von Zweydorf F."/>
            <person name="Gloeckner C.J."/>
            <person name="Schmidt J."/>
            <person name="Riess O."/>
            <person name="Schmidt T."/>
        </authorList>
    </citation>
    <scope>INTERACTION WITH ATXN3</scope>
</reference>
<reference key="40">
    <citation type="journal article" date="2019" name="Proc. Natl. Acad. Sci. U.S.A.">
        <title>Caspase-7 uses RNA to enhance proteolysis of poly(ADP-ribose) polymerase 1 and other RNA-binding proteins.</title>
        <authorList>
            <person name="Desroches A."/>
            <person name="Denault J.B."/>
        </authorList>
    </citation>
    <scope>FUNCTION</scope>
    <scope>CATALYTIC ACTIVITY</scope>
    <scope>DOMAIN</scope>
    <scope>RNA-BINDING</scope>
    <scope>MUTAGENESIS OF 38-LYS--LYS-41 AND 39-LYS-LYS-40</scope>
</reference>
<reference key="41">
    <citation type="journal article" date="2021" name="Biochem. J.">
        <title>Characterization of caspase-7 interaction with RNA.</title>
        <authorList>
            <person name="Desroches A."/>
            <person name="Denault J.B."/>
        </authorList>
    </citation>
    <scope>FUNCTION</scope>
    <scope>CATALYTIC ACTIVITY</scope>
    <scope>DOMAIN</scope>
    <scope>RNA-BINDING</scope>
    <scope>MUTAGENESIS OF ASP-23 AND 39-LYS-LYS-40</scope>
</reference>
<reference key="42">
    <citation type="journal article" date="2022" name="Mol. Cell">
        <title>Pathogen hijacks programmed cell death signaling by arginine ADPR-deacylization of caspases.</title>
        <authorList>
            <person name="Peng T."/>
            <person name="Tao X."/>
            <person name="Xia Z."/>
            <person name="Hu S."/>
            <person name="Xue J."/>
            <person name="Zhu Q."/>
            <person name="Pan X."/>
            <person name="Zhang Q."/>
            <person name="Li S."/>
        </authorList>
    </citation>
    <scope>FUNCTION</scope>
    <scope>PROTEOLYTIC CLEAVAGE</scope>
    <scope>ADP-RIBOXANATION AT ARG-233 (MICROBIAL INFECTION)</scope>
</reference>
<reference key="43">
    <citation type="journal article" date="2023" name="Science">
        <title>Structures of BIRC6-client complexes provide a mechanism of SMAC-mediated release of caspases.</title>
        <authorList>
            <person name="Hunkeler M."/>
            <person name="Jin C.Y."/>
            <person name="Fischer E.S."/>
        </authorList>
    </citation>
    <scope>FUNCTION</scope>
    <scope>ACTIVITY REGULATION</scope>
    <scope>UBIQUITINATION BY BIRC6</scope>
</reference>
<reference key="44">
    <citation type="journal article" date="2023" name="Science">
        <title>Structural basis for SMAC-mediated antagonism of caspase inhibition by the giant ubiquitin ligase BIRC6.</title>
        <authorList>
            <person name="Dietz L."/>
            <person name="Ellison C.J."/>
            <person name="Riechmann C."/>
            <person name="Cassidy C.K."/>
            <person name="Felfoldi F.D."/>
            <person name="Pinto-Fernandez A."/>
            <person name="Kessler B.M."/>
            <person name="Elliott P.R."/>
        </authorList>
    </citation>
    <scope>FUNCTION</scope>
    <scope>ACTIVITY REGULATION</scope>
    <scope>UBIQUITINATION BY BIRC6</scope>
</reference>
<reference evidence="69" key="45">
    <citation type="journal article" date="2001" name="Cell">
        <title>Structural basis of caspase-7 inhibition by XIAP.</title>
        <authorList>
            <person name="Chai J."/>
            <person name="Shiozaki E."/>
            <person name="Srinivasula S.M."/>
            <person name="Wu Q."/>
            <person name="Datta P."/>
            <person name="Alnemri E.S."/>
            <person name="Shi Y."/>
            <person name="Dataa P."/>
        </authorList>
    </citation>
    <scope>X-RAY CRYSTALLOGRAPHY (2.45 ANGSTROMS) OF 51-198 AND 199-303 IN COMPLEX WITH XIAP</scope>
    <scope>FUNCTION</scope>
    <scope>CATALYTIC ACTIVITY</scope>
    <scope>ACTIVITY REGULATION</scope>
    <scope>INTERACTION WITH XIAP</scope>
</reference>
<reference evidence="68" key="46">
    <citation type="journal article" date="2001" name="Cell">
        <title>Structural basis of caspase inhibition by XIAP: differential roles of the linker versus the BIR domain.</title>
        <authorList>
            <person name="Huang Y."/>
            <person name="Park Y.C."/>
            <person name="Rich R.L."/>
            <person name="Segal D."/>
            <person name="Myszka D.G."/>
            <person name="Wu H."/>
        </authorList>
    </citation>
    <scope>X-RAY CRYSTALLOGRAPHY (2.40 ANGSTROMS) OF 24-303 IN COMPLEX WITH XIAP</scope>
    <scope>FUNCTION</scope>
    <scope>ACTIVITY REGULATION</scope>
    <scope>INTERACTION WITH XIAP</scope>
</reference>
<reference key="47">
    <citation type="journal article" date="2001" name="Cell">
        <title>Crystal structure of a procaspase-7 zymogen: mechanisms of activation and substrate binding.</title>
        <authorList>
            <person name="Chai J."/>
            <person name="Wu Q."/>
            <person name="Shiozaki E."/>
            <person name="Srinivasula S.M."/>
            <person name="Alnemri E.S."/>
            <person name="Shi Y."/>
        </authorList>
    </citation>
    <scope>X-RAY CRYSTALLOGRAPHY (2.6 ANGSTROMS) OF 51-303</scope>
    <scope>FUNCTION</scope>
    <scope>CATALYTIC ACTIVITY</scope>
    <scope>SUBUNIT</scope>
    <scope>ACTIVE SITE</scope>
    <scope>MUTAGENESIS OF CYS-186</scope>
</reference>
<reference evidence="67" key="48">
    <citation type="journal article" date="2001" name="Proc. Natl. Acad. Sci. U.S.A.">
        <title>Structural basis for the activation of human procaspase-7.</title>
        <authorList>
            <person name="Riedl S.J."/>
            <person name="Fuentes-Prior P."/>
            <person name="Renatus M."/>
            <person name="Kairies N."/>
            <person name="Krapp S."/>
            <person name="Huber R."/>
            <person name="Salvesen G.S."/>
            <person name="Bode W."/>
        </authorList>
    </citation>
    <scope>X-RAY CRYSTALLOGRAPHY (2.90 ANGSTROMS) OF 47-303</scope>
    <scope>SUBUNIT</scope>
    <scope>MUTAGENESIS OF CYS-186</scope>
</reference>
<reference evidence="70 71" key="49">
    <citation type="journal article" date="2004" name="Proc. Natl. Acad. Sci. U.S.A.">
        <title>Discovery of an allosteric site in the caspases.</title>
        <authorList>
            <person name="Hardy J.A."/>
            <person name="Lam J."/>
            <person name="Nguyen J.T."/>
            <person name="O'Brien T."/>
            <person name="Wells J.A."/>
        </authorList>
    </citation>
    <scope>X-RAY CRYSTALLOGRAPHY (2.80 ANGSTROMS) OF 50-303 IN COMPLEX WITH DICA AND FICA ALLOSTERIC INHIBITORS</scope>
    <scope>FUNCTION</scope>
    <scope>ACTIVITY REGULATION</scope>
    <scope>ACTIVE SITES</scope>
</reference>
<reference evidence="72 73 74 75 76 77" key="50">
    <citation type="journal article" date="2007" name="FEBS J.">
        <title>Plasticity of S2-S4 specificity pockets of executioner caspase-7 revealed by structural and kinetic analysis.</title>
        <authorList>
            <person name="Agniswamy J."/>
            <person name="Fang B."/>
            <person name="Weber I.T."/>
        </authorList>
    </citation>
    <scope>X-RAY CRYSTALLOGRAPHY (2.14 ANGSTROMS) OF 24-196 AND 207-303</scope>
    <scope>FUNCTION</scope>
    <scope>CATALYTIC ACTIVITY</scope>
</reference>
<reference evidence="78 79" key="51">
    <citation type="journal article" date="2013" name="Acta Crystallogr. D">
        <title>Structural asymmetry of procaspase-7 bound to a specific inhibitor.</title>
        <authorList>
            <person name="Kang H.J."/>
            <person name="Lee Y.M."/>
            <person name="Bae K.H."/>
            <person name="Kim S.J."/>
            <person name="Chung S.J."/>
        </authorList>
    </citation>
    <scope>X-RAY CRYSTALLOGRAPHY (3.00 ANGSTROMS) OF 47-303 OF MUTANT IV IN COMPLEX WITH AC-DEVD-CHO INHIBITOR</scope>
    <scope>FUNCTION</scope>
    <scope>CATALYTIC ACTIVITY</scope>
    <scope>MUTAGENESIS OF 195-ILE--ASP-204; 195-ILE--ASP-206 AND 195-ILE--GLY-200</scope>
</reference>
<reference evidence="80 81" key="52">
    <citation type="journal article" date="2013" name="Proc. Natl. Acad. Sci. U.S.A.">
        <title>Structural snapshots reveal distinct mechanisms of procaspase-3 and -7 activation.</title>
        <authorList>
            <person name="Thomsen N.D."/>
            <person name="Koerber J.T."/>
            <person name="Wells J.A."/>
        </authorList>
    </citation>
    <scope>X-RAY CRYSTALLOGRAPHY (1.65 ANGSTROMS) OF 57-303 IN COMPLEX WITH COVALENT INHIBITORS</scope>
    <scope>MUTAGENESIS OF ASP-23 AND ASP-198</scope>
</reference>
<reference evidence="82" key="53">
    <citation type="journal article" date="2014" name="Biochem. J.">
        <title>Combined inhibition of caspase 3 and caspase 7 by two highly selective DARPins slows down cellular demise.</title>
        <authorList>
            <person name="Fluetsch A."/>
            <person name="Ackermann R."/>
            <person name="Schroeder T."/>
            <person name="Lukarska M."/>
            <person name="Hausammann G.J."/>
            <person name="Weinert C."/>
            <person name="Briand C."/>
            <person name="Gruetter M.G."/>
        </authorList>
    </citation>
    <scope>X-RAY CRYSTALLOGRAPHY (2.26 ANGSTROMS) OF 24-198 AND 207-303 IN COMPLEX WITH DARPIN D7.18</scope>
    <scope>ACTIVITY REGULATION</scope>
</reference>
<reference evidence="83 84 85 86 87 88 89" key="54">
    <citation type="journal article" date="2016" name="ACS Chem. Biol.">
        <title>Reprogramming caspase-7 specificity by regio-specific mutations and selection provides alternate solutions for substrate recognition.</title>
        <authorList>
            <person name="Hill M.E."/>
            <person name="MacPherson D.J."/>
            <person name="Wu P."/>
            <person name="Julien O."/>
            <person name="Wells J.A."/>
            <person name="Hardy J.A."/>
        </authorList>
    </citation>
    <scope>X-RAY CRYSTALLOGRAPHY (2.30 ANGSTROMS) OF 1-198 AND 199-303</scope>
    <scope>FUNCTION</scope>
    <scope>CATALYTIC ACTIVITY</scope>
    <scope>MUTAGENESIS OF 230-TYR--SER-234; 232-TRP--SER-234 AND GLN-276</scope>
</reference>
<reference evidence="90" key="55">
    <citation type="journal article" date="2017" name="Structure">
        <title>Dual site phosphorylation of caspase-7 by PAK2 blocks apoptotic activity by two distinct mechanisms.</title>
        <authorList>
            <person name="Eron S.J."/>
            <person name="Raghupathi K."/>
            <person name="Hardy J.A."/>
        </authorList>
    </citation>
    <scope>X-RAY CRYSTALLOGRAPHY (2.20 ANGSTROMS) OF 1-198 AND 199-303</scope>
    <scope>ACTIVITY REGULATION</scope>
    <scope>PROTEOLYTIC CLEAVAGE</scope>
    <scope>PHOSPHORYLATION AT SER-30; THR-173 AND SER-239</scope>
    <scope>MUTAGENESIS OF SER-30; CYS-186; SER-239 AND CYS-290</scope>
</reference>
<reference evidence="91" key="56">
    <citation type="journal article" date="2022" name="MBio">
        <title>Calmodulin binding activates chromobacterium CopC effector to ADP-riboxanate host apoptotic caspases.</title>
        <authorList>
            <person name="Liu Y."/>
            <person name="Zeng H."/>
            <person name="Hou Y."/>
            <person name="Li Z."/>
            <person name="Li L."/>
            <person name="Song X."/>
            <person name="Ding J."/>
            <person name="Shao F."/>
            <person name="Xu Y."/>
        </authorList>
    </citation>
    <scope>X-RAY CRYSTALLOGRAPHY (3.60 ANGSTROMS) OF 24-303 IN COMPLEX WITH C.VIOLACEUM COPC TOXIN</scope>
    <scope>FUNCTION</scope>
    <scope>PROTEOLYTIC CLEAVAGE</scope>
    <scope>ADP-RIBOXANATION AT ARG-233 (MICROBIAL INFECTION)</scope>
    <scope>MUTAGENESIS OF ARG-233</scope>
</reference>
<feature type="initiator methionine" description="Removed" evidence="92 93">
    <location>
        <position position="1"/>
    </location>
</feature>
<feature type="propeptide" id="PRO_0000004616" description="N-terminally processed" evidence="59 60 62 65">
    <location>
        <begin position="2"/>
        <end position="23"/>
    </location>
</feature>
<feature type="chain" id="PRO_0000004617" description="Caspase-7 subunit p20" evidence="59 60 62 63 65">
    <location>
        <begin position="24"/>
        <end position="198"/>
    </location>
</feature>
<feature type="propeptide" id="PRO_0000004618" evidence="59 60 62 63">
    <location>
        <begin position="199"/>
        <end position="206"/>
    </location>
</feature>
<feature type="chain" id="PRO_0000004619" description="Caspase-7 subunit p11" evidence="59 60 63 65">
    <location>
        <begin position="207"/>
        <end position="303"/>
    </location>
</feature>
<feature type="region of interest" description="Disordered" evidence="2">
    <location>
        <begin position="1"/>
        <end position="30"/>
    </location>
</feature>
<feature type="region of interest" description="Exosite" evidence="27 37 38">
    <location>
        <begin position="38"/>
        <end position="41"/>
    </location>
</feature>
<feature type="region of interest" description="Loop L1" evidence="53">
    <location>
        <begin position="76"/>
        <end position="87"/>
    </location>
</feature>
<feature type="region of interest" description="Loop L2" evidence="53">
    <location>
        <begin position="187"/>
        <end position="196"/>
    </location>
</feature>
<feature type="region of interest" description="Loop L3" evidence="53">
    <location>
        <begin position="226"/>
        <end position="238"/>
    </location>
</feature>
<feature type="region of interest" description="Loop L4" evidence="53">
    <location>
        <begin position="274"/>
        <end position="288"/>
    </location>
</feature>
<feature type="compositionally biased region" description="Acidic residues" evidence="2">
    <location>
        <begin position="1"/>
        <end position="21"/>
    </location>
</feature>
<feature type="active site" evidence="11">
    <location>
        <position position="144"/>
    </location>
</feature>
<feature type="active site" evidence="7 11 16">
    <location>
        <position position="186"/>
    </location>
</feature>
<feature type="site" description="Cleavage; by CAPN1" evidence="21">
    <location>
        <begin position="36"/>
        <end position="37"/>
    </location>
</feature>
<feature type="site" description="Cleavage; by CAPN1" evidence="21">
    <location>
        <begin position="45"/>
        <end position="46"/>
    </location>
</feature>
<feature type="site" description="Cleavage; by CAPN1" evidence="21">
    <location>
        <begin position="47"/>
        <end position="48"/>
    </location>
</feature>
<feature type="site" description="Involved in allosteric regulation" evidence="11 20">
    <location>
        <position position="187"/>
    </location>
</feature>
<feature type="site" description="Involved in allosteric regulation" evidence="11 20">
    <location>
        <position position="223"/>
    </location>
</feature>
<feature type="modified residue" description="N-acetylalanine" evidence="92 93">
    <location>
        <position position="2"/>
    </location>
</feature>
<feature type="modified residue" description="Phosphoserine; by PAK2" evidence="25 34">
    <location>
        <position position="30"/>
    </location>
</feature>
<feature type="modified residue" description="Phosphoserine" evidence="94">
    <location>
        <position position="37"/>
    </location>
</feature>
<feature type="modified residue" description="Phosphothreonine; by PAK2" evidence="25 34">
    <location>
        <position position="173"/>
    </location>
</feature>
<feature type="modified residue" description="(Microbial infection) ADP-riboxanated arginine" evidence="39 40">
    <location>
        <position position="233"/>
    </location>
</feature>
<feature type="modified residue" description="Phosphoserine; by PAK2" evidence="25 34">
    <location>
        <position position="239"/>
    </location>
</feature>
<feature type="splice variant" id="VSP_045325" description="In isoform 4." evidence="51">
    <original>MADDQGCIEEQGVEDSANEDSVDAKPDRSSFVPSLF</original>
    <variation>MQRGLFSDGDT</variation>
    <location>
        <begin position="1"/>
        <end position="36"/>
    </location>
</feature>
<feature type="splice variant" id="VSP_000806" description="In isoform Alpha'." evidence="52 54 57">
    <original>M</original>
    <variation>MDCVGWPPGRKWHLEKNTSCGGSSGICASYVTQM</variation>
    <location>
        <position position="1"/>
    </location>
</feature>
<feature type="splice variant" id="VSP_000807" description="In isoform Beta." evidence="54">
    <original>VIYGKDGVTPIKDLTAHFRGDRCKTLLEKPKLFFIQACRGTELDDGIQADSGPINDTDANPRYKIPVEADFLFAYSTVPGYYSWRSPGRGSWFVQALCSILEEHGKDLEIMQILTRVNDRVARHFESQSDDPHFHEKKQIPCVVSMLTKELYFSQ</original>
    <variation>MESCSVTQAGVQRRDLGRLQPPPPRLAEGPSLMMASRPTRGPSMTQMLILDTRSQWKLTSSSPIPRFQAITRGGAQEEAPGLCKPSAPSWRSTEKTWKSCRSSPG</variation>
    <location>
        <begin position="149"/>
        <end position="303"/>
    </location>
</feature>
<feature type="sequence variant" id="VAR_048617" description="In dbSNP:rs11555408." evidence="12 50">
    <original>D</original>
    <variation>E</variation>
    <location>
        <position position="4"/>
    </location>
</feature>
<feature type="sequence variant" id="VAR_048618" description="In dbSNP:rs2227310.">
    <original>D</original>
    <variation>E</variation>
    <location>
        <position position="255"/>
    </location>
</feature>
<feature type="mutagenesis site" description="Abolished cleavage at the N-terminus, leading to impaired activation and thiol protease activity. In P7-D2A mutant; abolished cleavage and activation, leading to decreased but mesureable activity; when associated with A-198." evidence="9 27 29 38">
    <original>D</original>
    <variation>A</variation>
    <location>
        <position position="23"/>
    </location>
</feature>
<feature type="mutagenesis site" description="Abolished phosphorylation by PAK2; when associated with A-173 and A-239." evidence="25">
    <original>S</original>
    <variation>A</variation>
    <location>
        <position position="30"/>
    </location>
</feature>
<feature type="mutagenesis site" description="Mimics phosphorylation; does not affect thiol protease activity." evidence="34">
    <original>S</original>
    <variation>E</variation>
    <location>
        <position position="30"/>
    </location>
</feature>
<feature type="mutagenesis site" description="Decreased ability to cleave PARP1 and PTGES3." evidence="27 35">
    <original>KKKK</original>
    <variation>AAAA</variation>
    <location>
        <begin position="38"/>
        <end position="41"/>
    </location>
</feature>
<feature type="mutagenesis site" description="Decreased ability to cleave PARP1." evidence="37">
    <original>KKKK</original>
    <variation>AKKA</variation>
    <location>
        <begin position="38"/>
        <end position="41"/>
    </location>
</feature>
<feature type="mutagenesis site" description="Does not affect ability to cleave PARP1." evidence="27 37">
    <original>KK</original>
    <variation>AA</variation>
    <location>
        <begin position="39"/>
        <end position="40"/>
    </location>
</feature>
<feature type="mutagenesis site" description="Decreased ability to cleave PARP1. Decreased RNA-binding." evidence="27 37 38">
    <original>KK</original>
    <variation>EE</variation>
    <location>
        <begin position="39"/>
        <end position="40"/>
    </location>
</feature>
<feature type="mutagenesis site" description="Decreased ability to cleave PARP1." evidence="27">
    <original>K</original>
    <variation>E</variation>
    <location>
        <position position="39"/>
    </location>
</feature>
<feature type="mutagenesis site" description="Abolished phosphorylation by PAK2; when associated with A-30 and A-239." evidence="25">
    <original>T</original>
    <variation>A</variation>
    <location>
        <position position="173"/>
    </location>
</feature>
<feature type="mutagenesis site" description="Abolished thiol protease activity." evidence="7 8 9 16 34 45">
    <original>C</original>
    <variation>A</variation>
    <location>
        <position position="186"/>
    </location>
</feature>
<feature type="mutagenesis site" description="Does not significantly affect thiol protease catalytic efficiency." evidence="20">
    <original>R</original>
    <variation>K</variation>
    <location>
        <position position="187"/>
    </location>
</feature>
<feature type="mutagenesis site" description="Reduced thiol protease catalytic efficiency." evidence="20">
    <original>R</original>
    <variation>M</variation>
    <variation>A</variation>
    <variation>G</variation>
    <location>
        <position position="187"/>
    </location>
</feature>
<feature type="mutagenesis site" description="Strongly reduced thiol protease catalytic efficiency." evidence="20">
    <original>R</original>
    <variation>W</variation>
    <variation>N</variation>
    <location>
        <position position="187"/>
    </location>
</feature>
<feature type="mutagenesis site" description="Strongly reduced thiol protease activity." evidence="16">
    <original>D</original>
    <variation>A</variation>
    <location>
        <position position="192"/>
    </location>
</feature>
<feature type="mutagenesis site" description="In mutant II; prevents cleavage of loop L2 region; retains significant thiol protease activity." evidence="30">
    <original>IQADSGPINDTD</original>
    <variation>LVPRGS</variation>
    <location>
        <begin position="195"/>
        <end position="206"/>
    </location>
</feature>
<feature type="mutagenesis site" description="In mutant III; prevents cleavage of loop L2 region; abolished thiol protease activity." evidence="30">
    <original>IQADSG</original>
    <variation>LVPRGS</variation>
    <location>
        <begin position="195"/>
        <end position="200"/>
    </location>
</feature>
<feature type="mutagenesis site" description="In mutant IV; prevents cleavage of loop L2 region; retains significant thiol protease activity." evidence="30">
    <original>DSGPIND</original>
    <variation>ASGPINDLVPRGS</variation>
    <location>
        <begin position="198"/>
        <end position="204"/>
    </location>
</feature>
<feature type="mutagenesis site" description="Strongly reduced cleavage and activation by initiator caspases. Abolished cleavage and activation by initiator caspases; when associated with A-206. In P7-D2A mutant; abolished cleavage and activation, leading to decreased but mesureable activity; when associated with A-23." evidence="9 16 29">
    <original>D</original>
    <variation>A</variation>
    <location>
        <position position="198"/>
    </location>
</feature>
<feature type="mutagenesis site" description="Reduced cleavage and activation by initiator caspases. Abolished cleavage and activation by initiator caspases; when associated with A-198." evidence="9 16">
    <original>D</original>
    <variation>A</variation>
    <location>
        <position position="206"/>
    </location>
</feature>
<feature type="mutagenesis site" description="Does not significantly affect thiol protease catalytic efficiency." evidence="20">
    <original>Y</original>
    <variation>A</variation>
    <variation>F</variation>
    <variation>W</variation>
    <variation>D</variation>
    <variation>E</variation>
    <location>
        <position position="223"/>
    </location>
</feature>
<feature type="mutagenesis site" description="Strongly reduced thiol protease catalytic efficiency." evidence="20">
    <original>Y</original>
    <variation>W</variation>
    <location>
        <position position="229"/>
    </location>
</feature>
<feature type="mutagenesis site" description="In esCasp-7 V3 mutant; promotes specificity toward alternate peptides with VEID, YVAD, WEHD, LETD or LEHD sequence; when associated with C-276. In esCasp-7 V4 mutant; promotes specificity toward alternate peptides with VEID, YVAD, WEHD, LETD or LEHD sequence; when associated with D-276." evidence="33">
    <original>YSWRS</original>
    <variation>VSYRV</variation>
    <location>
        <begin position="230"/>
        <end position="234"/>
    </location>
</feature>
<feature type="mutagenesis site" description="In dsCasp-7 mutant; unable to cleave DEVD and VEID peptides; when associated with F-276." evidence="33">
    <original>WRS</original>
    <variation>HRE</variation>
    <location>
        <begin position="232"/>
        <end position="234"/>
    </location>
</feature>
<feature type="mutagenesis site" description="Abolished ADP-riboxanation by C.violaceum CopC." evidence="40">
    <original>R</original>
    <variation>A</variation>
    <location>
        <position position="233"/>
    </location>
</feature>
<feature type="mutagenesis site" description="Abolished phosphorylation by PAK2; when associated with A-30 and A-173." evidence="25">
    <original>S</original>
    <variation>A</variation>
    <location>
        <position position="239"/>
    </location>
</feature>
<feature type="mutagenesis site" description="Mimics phosphorylation; leading to inactivate thiol protease activity." evidence="34">
    <original>S</original>
    <variation>E</variation>
    <location>
        <position position="239"/>
    </location>
</feature>
<feature type="mutagenesis site" description="In esCasp-7 V3 mutant; promotes specificity toward alternate peptides with VEID, YVAD, WEHD, LETD or LEHD sequence; when associated with 230-V--V-234." evidence="33">
    <original>Q</original>
    <variation>C</variation>
    <location>
        <position position="276"/>
    </location>
</feature>
<feature type="mutagenesis site" description="In esCasp-7 V4 mutant; promotes specificity toward alternate peptides with VEID, YVAD, WEHD, LETD or LEHD sequence; when associated with 230-V--V-234." evidence="33">
    <original>Q</original>
    <variation>D</variation>
    <location>
        <position position="276"/>
    </location>
</feature>
<feature type="mutagenesis site" description="In dsCasp-7 mutant; unable to cleave DEVD sand VEID peptides; when associated with 232-H--E-234." evidence="33">
    <original>Q</original>
    <variation>F</variation>
    <location>
        <position position="276"/>
    </location>
</feature>
<feature type="mutagenesis site" description="Decreased phosphorylation by PAK2." evidence="34">
    <original>C</original>
    <variation>S</variation>
    <location>
        <position position="290"/>
    </location>
</feature>
<feature type="mutagenesis site" description="Does not significantly affect thiol protease catalytic activity." evidence="20">
    <original>C</original>
    <variation>T</variation>
    <variation>N</variation>
    <location>
        <position position="290"/>
    </location>
</feature>
<feature type="sequence conflict" description="In Ref. 2; AAC50346." evidence="58" ref="2">
    <original>G</original>
    <variation>A</variation>
    <location>
        <position position="194"/>
    </location>
</feature>
<feature type="helix" evidence="97">
    <location>
        <begin position="56"/>
        <end position="58"/>
    </location>
</feature>
<feature type="strand" evidence="99">
    <location>
        <begin position="64"/>
        <end position="66"/>
    </location>
</feature>
<feature type="strand" evidence="99">
    <location>
        <begin position="68"/>
        <end position="74"/>
    </location>
</feature>
<feature type="helix" evidence="99">
    <location>
        <begin position="80"/>
        <end position="82"/>
    </location>
</feature>
<feature type="helix" evidence="99">
    <location>
        <begin position="90"/>
        <end position="104"/>
    </location>
</feature>
<feature type="strand" evidence="99">
    <location>
        <begin position="106"/>
        <end position="113"/>
    </location>
</feature>
<feature type="helix" evidence="99">
    <location>
        <begin position="116"/>
        <end position="127"/>
    </location>
</feature>
<feature type="helix" evidence="95">
    <location>
        <begin position="131"/>
        <end position="133"/>
    </location>
</feature>
<feature type="strand" evidence="99">
    <location>
        <begin position="137"/>
        <end position="143"/>
    </location>
</feature>
<feature type="strand" evidence="99">
    <location>
        <begin position="149"/>
        <end position="152"/>
    </location>
</feature>
<feature type="strand" evidence="99">
    <location>
        <begin position="155"/>
        <end position="158"/>
    </location>
</feature>
<feature type="helix" evidence="99">
    <location>
        <begin position="159"/>
        <end position="163"/>
    </location>
</feature>
<feature type="helix" evidence="99">
    <location>
        <begin position="164"/>
        <end position="166"/>
    </location>
</feature>
<feature type="turn" evidence="99">
    <location>
        <begin position="168"/>
        <end position="170"/>
    </location>
</feature>
<feature type="helix" evidence="99">
    <location>
        <begin position="172"/>
        <end position="174"/>
    </location>
</feature>
<feature type="strand" evidence="99">
    <location>
        <begin position="179"/>
        <end position="185"/>
    </location>
</feature>
<feature type="strand" evidence="97">
    <location>
        <begin position="188"/>
        <end position="190"/>
    </location>
</feature>
<feature type="turn" evidence="98">
    <location>
        <begin position="209"/>
        <end position="211"/>
    </location>
</feature>
<feature type="turn" evidence="99">
    <location>
        <begin position="215"/>
        <end position="218"/>
    </location>
</feature>
<feature type="strand" evidence="99">
    <location>
        <begin position="219"/>
        <end position="225"/>
    </location>
</feature>
<feature type="strand" evidence="96">
    <location>
        <begin position="227"/>
        <end position="229"/>
    </location>
</feature>
<feature type="strand" evidence="99">
    <location>
        <begin position="232"/>
        <end position="234"/>
    </location>
</feature>
<feature type="turn" evidence="99">
    <location>
        <begin position="235"/>
        <end position="237"/>
    </location>
</feature>
<feature type="helix" evidence="99">
    <location>
        <begin position="240"/>
        <end position="252"/>
    </location>
</feature>
<feature type="turn" evidence="99">
    <location>
        <begin position="253"/>
        <end position="255"/>
    </location>
</feature>
<feature type="helix" evidence="99">
    <location>
        <begin position="258"/>
        <end position="272"/>
    </location>
</feature>
<feature type="turn" evidence="100">
    <location>
        <begin position="276"/>
        <end position="278"/>
    </location>
</feature>
<feature type="helix" evidence="99">
    <location>
        <begin position="280"/>
        <end position="282"/>
    </location>
</feature>
<feature type="strand" evidence="99">
    <location>
        <begin position="290"/>
        <end position="293"/>
    </location>
</feature>
<feature type="strand" evidence="99">
    <location>
        <begin position="296"/>
        <end position="298"/>
    </location>
</feature>
<gene>
    <name evidence="57 66" type="primary">CASP7</name>
    <name evidence="54" type="synonym">MCH3</name>
</gene>
<sequence>MADDQGCIEEQGVEDSANEDSVDAKPDRSSFVPSLFSKKKKNVTMRSIKTTRDRVPTYQYNMNFEKLGKCIIINNKNFDKVTGMGVRNGTDKDAEALFKCFRSLGFDVIVYNDCSCAKMQDLLKKASEEDHTNAACFACILLSHGEENVIYGKDGVTPIKDLTAHFRGDRCKTLLEKPKLFFIQACRGTELDDGIQADSGPINDTDANPRYKIPVEADFLFAYSTVPGYYSWRSPGRGSWFVQALCSILEEHGKDLEIMQILTRVNDRVARHFESQSDDPHFHEKKQIPCVVSMLTKELYFSQ</sequence>